<keyword id="KW-0002">3D-structure</keyword>
<keyword id="KW-0010">Activator</keyword>
<keyword id="KW-0025">Alternative splicing</keyword>
<keyword id="KW-0037">Angiogenesis</keyword>
<keyword id="KW-0040">ANK repeat</keyword>
<keyword id="KW-0106">Calcium</keyword>
<keyword id="KW-1003">Cell membrane</keyword>
<keyword id="KW-0217">Developmental protein</keyword>
<keyword id="KW-0221">Differentiation</keyword>
<keyword id="KW-0903">Direct protein sequencing</keyword>
<keyword id="KW-1015">Disulfide bond</keyword>
<keyword id="KW-0245">EGF-like domain</keyword>
<keyword id="KW-0967">Endosome</keyword>
<keyword id="KW-0325">Glycoprotein</keyword>
<keyword id="KW-0379">Hydroxylation</keyword>
<keyword id="KW-1017">Isopeptide bond</keyword>
<keyword id="KW-0472">Membrane</keyword>
<keyword id="KW-0479">Metal-binding</keyword>
<keyword id="KW-0914">Notch signaling pathway</keyword>
<keyword id="KW-0539">Nucleus</keyword>
<keyword id="KW-0597">Phosphoprotein</keyword>
<keyword id="KW-0675">Receptor</keyword>
<keyword id="KW-1185">Reference proteome</keyword>
<keyword id="KW-0677">Repeat</keyword>
<keyword id="KW-0732">Signal</keyword>
<keyword id="KW-0804">Transcription</keyword>
<keyword id="KW-0805">Transcription regulation</keyword>
<keyword id="KW-0812">Transmembrane</keyword>
<keyword id="KW-1133">Transmembrane helix</keyword>
<keyword id="KW-0832">Ubl conjugation</keyword>
<gene>
    <name type="primary">Notch1</name>
    <name evidence="37" type="synonym">Motch</name>
</gene>
<feature type="signal peptide" evidence="4">
    <location>
        <begin position="1"/>
        <end position="18"/>
    </location>
</feature>
<feature type="chain" id="PRO_0000007677" description="Neurogenic locus notch homolog protein 1">
    <location>
        <begin position="19"/>
        <end position="2531"/>
    </location>
</feature>
<feature type="chain" id="PRO_0000007678" description="Notch 1 extracellular truncation" evidence="39 40">
    <location>
        <begin position="1711"/>
        <end position="2531"/>
    </location>
</feature>
<feature type="chain" id="PRO_0000007679" description="Notch 1 intracellular domain" evidence="39 41 42">
    <location>
        <begin position="1744"/>
        <end position="2531"/>
    </location>
</feature>
<feature type="topological domain" description="Extracellular" evidence="38">
    <location>
        <begin position="19"/>
        <end position="1725"/>
    </location>
</feature>
<feature type="transmembrane region" description="Helical" evidence="2">
    <location>
        <begin position="1726"/>
        <end position="1746"/>
    </location>
</feature>
<feature type="topological domain" description="Cytoplasmic" evidence="38">
    <location>
        <begin position="1747"/>
        <end position="2531"/>
    </location>
</feature>
<feature type="domain" description="EGF-like 1" evidence="5">
    <location>
        <begin position="20"/>
        <end position="58"/>
    </location>
</feature>
<feature type="domain" description="EGF-like 2" evidence="5">
    <location>
        <begin position="59"/>
        <end position="99"/>
    </location>
</feature>
<feature type="domain" description="EGF-like 3" evidence="5">
    <location>
        <begin position="102"/>
        <end position="139"/>
    </location>
</feature>
<feature type="domain" description="EGF-like 4" evidence="5">
    <location>
        <begin position="140"/>
        <end position="176"/>
    </location>
</feature>
<feature type="domain" description="EGF-like 5; calcium-binding" evidence="5">
    <location>
        <begin position="178"/>
        <end position="216"/>
    </location>
</feature>
<feature type="domain" description="EGF-like 6" evidence="5">
    <location>
        <begin position="218"/>
        <end position="255"/>
    </location>
</feature>
<feature type="domain" description="EGF-like 7; calcium-binding" evidence="5">
    <location>
        <begin position="257"/>
        <end position="293"/>
    </location>
</feature>
<feature type="domain" description="EGF-like 8; calcium-binding" evidence="5">
    <location>
        <begin position="295"/>
        <end position="333"/>
    </location>
</feature>
<feature type="domain" description="EGF-like 9; calcium-binding" evidence="5">
    <location>
        <begin position="335"/>
        <end position="371"/>
    </location>
</feature>
<feature type="domain" description="EGF-like 10; calcium-binding" evidence="5">
    <location>
        <begin position="372"/>
        <end position="410"/>
    </location>
</feature>
<feature type="domain" description="EGF-like 11; calcium-binding" evidence="5">
    <location>
        <begin position="412"/>
        <end position="450"/>
    </location>
</feature>
<feature type="domain" description="EGF-like 12; calcium-binding" evidence="5">
    <location>
        <begin position="452"/>
        <end position="488"/>
    </location>
</feature>
<feature type="domain" description="EGF-like 13; calcium-binding" evidence="5">
    <location>
        <begin position="490"/>
        <end position="526"/>
    </location>
</feature>
<feature type="domain" description="EGF-like 14; calcium-binding" evidence="5">
    <location>
        <begin position="528"/>
        <end position="564"/>
    </location>
</feature>
<feature type="domain" description="EGF-like 15; calcium-binding" evidence="5">
    <location>
        <begin position="566"/>
        <end position="601"/>
    </location>
</feature>
<feature type="domain" description="EGF-like 16; calcium-binding" evidence="5">
    <location>
        <begin position="603"/>
        <end position="639"/>
    </location>
</feature>
<feature type="domain" description="EGF-like 17; calcium-binding" evidence="5">
    <location>
        <begin position="641"/>
        <end position="676"/>
    </location>
</feature>
<feature type="domain" description="EGF-like 18; calcium-binding" evidence="5">
    <location>
        <begin position="678"/>
        <end position="714"/>
    </location>
</feature>
<feature type="domain" description="EGF-like 19; calcium-binding" evidence="5">
    <location>
        <begin position="716"/>
        <end position="751"/>
    </location>
</feature>
<feature type="domain" description="EGF-like 20; calcium-binding" evidence="5">
    <location>
        <begin position="753"/>
        <end position="789"/>
    </location>
</feature>
<feature type="domain" description="EGF-like 21; calcium-binding" evidence="5">
    <location>
        <begin position="791"/>
        <end position="827"/>
    </location>
</feature>
<feature type="domain" description="EGF-like 22" evidence="5">
    <location>
        <begin position="829"/>
        <end position="867"/>
    </location>
</feature>
<feature type="domain" description="EGF-like 23; calcium-binding" evidence="5">
    <location>
        <begin position="869"/>
        <end position="905"/>
    </location>
</feature>
<feature type="domain" description="EGF-like 24" evidence="5">
    <location>
        <begin position="907"/>
        <end position="943"/>
    </location>
</feature>
<feature type="domain" description="EGF-like 25; calcium-binding" evidence="5">
    <location>
        <begin position="945"/>
        <end position="981"/>
    </location>
</feature>
<feature type="domain" description="EGF-like 26" evidence="5">
    <location>
        <begin position="983"/>
        <end position="1019"/>
    </location>
</feature>
<feature type="domain" description="EGF-like 27; calcium-binding" evidence="5">
    <location>
        <begin position="1021"/>
        <end position="1057"/>
    </location>
</feature>
<feature type="domain" description="EGF-like 28" evidence="5">
    <location>
        <begin position="1059"/>
        <end position="1095"/>
    </location>
</feature>
<feature type="domain" description="EGF-like 29" evidence="38">
    <location>
        <begin position="1097"/>
        <end position="1143"/>
    </location>
</feature>
<feature type="domain" description="EGF-like 30; calcium-binding" evidence="5">
    <location>
        <begin position="1145"/>
        <end position="1181"/>
    </location>
</feature>
<feature type="domain" description="EGF-like 31; calcium-binding" evidence="5">
    <location>
        <begin position="1183"/>
        <end position="1219"/>
    </location>
</feature>
<feature type="domain" description="EGF-like 32; calcium-binding" evidence="5">
    <location>
        <begin position="1221"/>
        <end position="1265"/>
    </location>
</feature>
<feature type="domain" description="EGF-like 33" evidence="5">
    <location>
        <begin position="1267"/>
        <end position="1305"/>
    </location>
</feature>
<feature type="domain" description="EGF-like 34" evidence="5">
    <location>
        <begin position="1307"/>
        <end position="1346"/>
    </location>
</feature>
<feature type="domain" description="EGF-like 35" evidence="5">
    <location>
        <begin position="1348"/>
        <end position="1384"/>
    </location>
</feature>
<feature type="domain" description="EGF-like 36" evidence="5">
    <location>
        <begin position="1387"/>
        <end position="1426"/>
    </location>
</feature>
<feature type="repeat" description="LNR 1">
    <location>
        <begin position="1449"/>
        <end position="1489"/>
    </location>
</feature>
<feature type="repeat" description="LNR 2">
    <location>
        <begin position="1490"/>
        <end position="1531"/>
    </location>
</feature>
<feature type="repeat" description="LNR 3">
    <location>
        <begin position="1532"/>
        <end position="1571"/>
    </location>
</feature>
<feature type="repeat" description="ANK 1">
    <location>
        <begin position="1917"/>
        <end position="1946"/>
    </location>
</feature>
<feature type="repeat" description="ANK 2">
    <location>
        <begin position="1950"/>
        <end position="1980"/>
    </location>
</feature>
<feature type="repeat" description="ANK 3">
    <location>
        <begin position="1984"/>
        <end position="2013"/>
    </location>
</feature>
<feature type="repeat" description="ANK 4">
    <location>
        <begin position="2017"/>
        <end position="2046"/>
    </location>
</feature>
<feature type="repeat" description="ANK 5">
    <location>
        <begin position="2050"/>
        <end position="2079"/>
    </location>
</feature>
<feature type="region of interest" description="Interaction with DLL4" evidence="3">
    <location>
        <begin position="420"/>
        <end position="421"/>
    </location>
</feature>
<feature type="region of interest" description="Interaction with DLL4" evidence="3">
    <location>
        <begin position="448"/>
        <end position="452"/>
    </location>
</feature>
<feature type="region of interest" description="Interaction with PSEN1" evidence="2">
    <location>
        <begin position="1718"/>
        <end position="1750"/>
    </location>
</feature>
<feature type="region of interest" description="Disordered" evidence="7">
    <location>
        <begin position="1770"/>
        <end position="1798"/>
    </location>
</feature>
<feature type="region of interest" description="HIF1AN-binding">
    <location>
        <begin position="1937"/>
        <end position="1945"/>
    </location>
</feature>
<feature type="region of interest" description="HIF1AN-binding">
    <location>
        <begin position="2004"/>
        <end position="2012"/>
    </location>
</feature>
<feature type="region of interest" description="Disordered" evidence="7">
    <location>
        <begin position="2140"/>
        <end position="2185"/>
    </location>
</feature>
<feature type="region of interest" description="Disordered" evidence="7">
    <location>
        <begin position="2382"/>
        <end position="2428"/>
    </location>
</feature>
<feature type="region of interest" description="Disordered" evidence="7">
    <location>
        <begin position="2440"/>
        <end position="2531"/>
    </location>
</feature>
<feature type="compositionally biased region" description="Low complexity" evidence="7">
    <location>
        <begin position="2382"/>
        <end position="2395"/>
    </location>
</feature>
<feature type="compositionally biased region" description="Polar residues" evidence="7">
    <location>
        <begin position="2440"/>
        <end position="2478"/>
    </location>
</feature>
<feature type="compositionally biased region" description="Low complexity" evidence="7">
    <location>
        <begin position="2488"/>
        <end position="2503"/>
    </location>
</feature>
<feature type="compositionally biased region" description="Polar residues" evidence="7">
    <location>
        <begin position="2504"/>
        <end position="2524"/>
    </location>
</feature>
<feature type="binding site" evidence="3">
    <location>
        <position position="432"/>
    </location>
    <ligand>
        <name>Ca(2+)</name>
        <dbReference type="ChEBI" id="CHEBI:29108"/>
        <label>1</label>
    </ligand>
</feature>
<feature type="binding site" evidence="3">
    <location>
        <position position="435"/>
    </location>
    <ligand>
        <name>Ca(2+)</name>
        <dbReference type="ChEBI" id="CHEBI:29108"/>
        <label>1</label>
    </ligand>
</feature>
<feature type="binding site" evidence="3">
    <location>
        <position position="452"/>
    </location>
    <ligand>
        <name>Ca(2+)</name>
        <dbReference type="ChEBI" id="CHEBI:29108"/>
        <label>2</label>
    </ligand>
</feature>
<feature type="binding site" evidence="3">
    <location>
        <position position="453"/>
    </location>
    <ligand>
        <name>Ca(2+)</name>
        <dbReference type="ChEBI" id="CHEBI:29108"/>
        <label>2</label>
    </ligand>
</feature>
<feature type="binding site" evidence="3">
    <location>
        <position position="455"/>
    </location>
    <ligand>
        <name>Ca(2+)</name>
        <dbReference type="ChEBI" id="CHEBI:29108"/>
        <label>2</label>
    </ligand>
</feature>
<feature type="binding site" evidence="3">
    <location>
        <position position="469"/>
    </location>
    <ligand>
        <name>Ca(2+)</name>
        <dbReference type="ChEBI" id="CHEBI:29108"/>
        <label>2</label>
    </ligand>
</feature>
<feature type="binding site" evidence="3">
    <location>
        <position position="470"/>
    </location>
    <ligand>
        <name>Ca(2+)</name>
        <dbReference type="ChEBI" id="CHEBI:29108"/>
        <label>2</label>
    </ligand>
</feature>
<feature type="binding site" evidence="3">
    <location>
        <position position="490"/>
    </location>
    <ligand>
        <name>Ca(2+)</name>
        <dbReference type="ChEBI" id="CHEBI:29108"/>
        <label>3</label>
    </ligand>
</feature>
<feature type="binding site" evidence="3">
    <location>
        <position position="491"/>
    </location>
    <ligand>
        <name>Ca(2+)</name>
        <dbReference type="ChEBI" id="CHEBI:29108"/>
        <label>3</label>
    </ligand>
</feature>
<feature type="binding site" evidence="3">
    <location>
        <position position="493"/>
    </location>
    <ligand>
        <name>Ca(2+)</name>
        <dbReference type="ChEBI" id="CHEBI:29108"/>
        <label>3</label>
    </ligand>
</feature>
<feature type="binding site" evidence="3">
    <location>
        <position position="507"/>
    </location>
    <ligand>
        <name>Ca(2+)</name>
        <dbReference type="ChEBI" id="CHEBI:29108"/>
        <label>3</label>
    </ligand>
</feature>
<feature type="binding site" evidence="3">
    <location>
        <position position="508"/>
    </location>
    <ligand>
        <name>Ca(2+)</name>
        <dbReference type="ChEBI" id="CHEBI:29108"/>
        <label>3</label>
    </ligand>
</feature>
<feature type="binding site" evidence="6">
    <location>
        <position position="1457"/>
    </location>
    <ligand>
        <name>Ca(2+)</name>
        <dbReference type="ChEBI" id="CHEBI:29108"/>
        <label>4</label>
    </ligand>
</feature>
<feature type="binding site" evidence="6">
    <location>
        <position position="1460"/>
    </location>
    <ligand>
        <name>Ca(2+)</name>
        <dbReference type="ChEBI" id="CHEBI:29108"/>
        <label>4</label>
    </ligand>
</feature>
<feature type="binding site" evidence="6">
    <location>
        <position position="1475"/>
    </location>
    <ligand>
        <name>Ca(2+)</name>
        <dbReference type="ChEBI" id="CHEBI:29108"/>
        <label>4</label>
    </ligand>
</feature>
<feature type="binding site" evidence="6">
    <location>
        <position position="1478"/>
    </location>
    <ligand>
        <name>Ca(2+)</name>
        <dbReference type="ChEBI" id="CHEBI:29108"/>
        <label>4</label>
    </ligand>
</feature>
<feature type="site" description="Interaction with DLL4" evidence="3">
    <location>
        <position position="469"/>
    </location>
</feature>
<feature type="site" description="Cleavage; by furin-like protease" evidence="34">
    <location>
        <begin position="1654"/>
        <end position="1655"/>
    </location>
</feature>
<feature type="site" description="Cleavage; by ADAM17" evidence="8 9">
    <location>
        <begin position="1710"/>
        <end position="1711"/>
    </location>
</feature>
<feature type="modified residue" description="Phosphothreonine" evidence="44">
    <location>
        <position position="1851"/>
    </location>
</feature>
<feature type="modified residue" description="(3S)-3-hydroxyasparagine; by HIF1AN; partial" evidence="19 20">
    <location>
        <position position="1945"/>
    </location>
</feature>
<feature type="modified residue" description="(3S)-3-hydroxyasparagine; by HIF1AN; partial" evidence="19 20">
    <location>
        <position position="2012"/>
    </location>
</feature>
<feature type="glycosylation site" description="O-linked (Glc...) serine" evidence="24">
    <location>
        <position position="65"/>
    </location>
</feature>
<feature type="glycosylation site" description="O-linked (Fuc...) threonine" evidence="24 30">
    <location>
        <position position="73"/>
    </location>
</feature>
<feature type="glycosylation site" description="O-linked (Fuc...) threonine" evidence="24 30">
    <location>
        <position position="116"/>
    </location>
</feature>
<feature type="glycosylation site" description="O-linked (Glc...) serine" evidence="24">
    <location>
        <position position="146"/>
    </location>
</feature>
<feature type="glycosylation site" description="O-linked (Fuc...) threonine" evidence="24 30">
    <location>
        <position position="194"/>
    </location>
</feature>
<feature type="glycosylation site" description="O-linked (Fuc...) threonine; alternate" evidence="30">
    <location>
        <position position="232"/>
    </location>
</feature>
<feature type="glycosylation site" description="O-linked (GalNAc...) threonine; alternate" evidence="2">
    <location>
        <position position="232"/>
    </location>
</feature>
<feature type="glycosylation site" description="O-linked (Fuc...) threonine" evidence="30">
    <location>
        <position position="311"/>
    </location>
</feature>
<feature type="glycosylation site" description="O-linked (Glc...) serine" evidence="24">
    <location>
        <position position="341"/>
    </location>
</feature>
<feature type="glycosylation site" description="O-linked (Fuc...) threonine" evidence="30">
    <location>
        <position position="349"/>
    </location>
</feature>
<feature type="glycosylation site" description="O-linked (Glc...) serine" evidence="24">
    <location>
        <position position="378"/>
    </location>
</feature>
<feature type="glycosylation site" description="O-linked (Glc...) serine" evidence="32">
    <location>
        <position position="435"/>
    </location>
</feature>
<feature type="glycosylation site" description="O-linked (Glc...) serine" evidence="24 30">
    <location>
        <position position="458"/>
    </location>
</feature>
<feature type="glycosylation site" description="O-linked (Fuc...) threonine" evidence="24 30">
    <location>
        <position position="466"/>
    </location>
</feature>
<feature type="glycosylation site" description="O-linked (Glc...) serine" evidence="24">
    <location>
        <position position="496"/>
    </location>
</feature>
<feature type="glycosylation site" description="O-linked (Glc...) serine" evidence="24">
    <location>
        <position position="534"/>
    </location>
</feature>
<feature type="glycosylation site" description="O-linked (Glc...) serine" evidence="24">
    <location>
        <position position="609"/>
    </location>
</feature>
<feature type="glycosylation site" description="O-linked (Fuc...) threonine" evidence="30">
    <location>
        <position position="617"/>
    </location>
</feature>
<feature type="glycosylation site" description="O-linked (Glc...) serine" evidence="24">
    <location>
        <position position="647"/>
    </location>
</feature>
<feature type="glycosylation site" description="O-linked (Fuc...) threonine" evidence="30">
    <location>
        <position position="692"/>
    </location>
</feature>
<feature type="glycosylation site" description="O-linked (Glc...) serine" evidence="24">
    <location>
        <position position="722"/>
    </location>
</feature>
<feature type="glycosylation site" description="O-linked (Glc...) serine" evidence="24 30">
    <location>
        <position position="759"/>
    </location>
</feature>
<feature type="glycosylation site" description="O-linked (Fuc...) threonine" evidence="24 30">
    <location>
        <position position="767"/>
    </location>
</feature>
<feature type="glycosylation site" description="O-linked (GlcNAc) serine" evidence="30">
    <location>
        <position position="784"/>
    </location>
</feature>
<feature type="glycosylation site" description="O-linked (Glc...) serine" evidence="24 30">
    <location>
        <position position="797"/>
    </location>
</feature>
<feature type="glycosylation site" description="O-linked (Fuc...) threonine" evidence="24 30">
    <location>
        <position position="805"/>
    </location>
</feature>
<feature type="glycosylation site" description="N-linked (GlcNAc...) asparagine" evidence="4">
    <location>
        <position position="888"/>
    </location>
</feature>
<feature type="glycosylation site" description="O-linked (GlcNAc) threonine" evidence="30">
    <location>
        <position position="900"/>
    </location>
</feature>
<feature type="glycosylation site" description="O-linked (Fuc) serine" evidence="30">
    <location>
        <position position="921"/>
    </location>
</feature>
<feature type="glycosylation site" description="O-linked (Glc...) serine" evidence="24">
    <location>
        <position position="951"/>
    </location>
</feature>
<feature type="glycosylation site" description="N-linked (GlcNAc...) asparagine" evidence="4">
    <location>
        <position position="959"/>
    </location>
</feature>
<feature type="glycosylation site" description="O-linked (Fuc...) threonine" evidence="30">
    <location>
        <position position="997"/>
    </location>
</feature>
<feature type="glycosylation site" description="O-linked (Glc...) serine" evidence="24">
    <location>
        <position position="1027"/>
    </location>
</feature>
<feature type="glycosylation site" description="O-linked (Fuc...) threonine" evidence="24 30">
    <location>
        <position position="1035"/>
    </location>
</feature>
<feature type="glycosylation site" description="O-linked (Glc...) serine" evidence="24">
    <location>
        <position position="1065"/>
    </location>
</feature>
<feature type="glycosylation site" description="O-linked (Fuc...) threonine" evidence="30">
    <location>
        <position position="1159"/>
    </location>
</feature>
<feature type="glycosylation site" description="N-linked (GlcNAc...) asparagine" evidence="4">
    <location>
        <position position="1179"/>
    </location>
</feature>
<feature type="glycosylation site" description="O-linked (Glc...) serine" evidence="24">
    <location>
        <position position="1189"/>
    </location>
</feature>
<feature type="glycosylation site" description="O-linked (Fuc...) threonine" evidence="24 30">
    <location>
        <position position="1197"/>
    </location>
</feature>
<feature type="glycosylation site" description="N-linked (GlcNAc...) asparagine" evidence="4">
    <location>
        <position position="1241"/>
    </location>
</feature>
<feature type="glycosylation site" description="O-linked (Glc...) serine" evidence="24">
    <location>
        <position position="1273"/>
    </location>
</feature>
<feature type="glycosylation site" description="O-linked (Fuc...) threonine" evidence="24 30">
    <location>
        <position position="1362"/>
    </location>
</feature>
<feature type="glycosylation site" description="O-linked (GlcNAc...) threonine" evidence="30">
    <location>
        <position position="1379"/>
    </location>
</feature>
<feature type="glycosylation site" description="O-linked (Fuc...) threonine; alternate" evidence="30">
    <location>
        <position position="1402"/>
    </location>
</feature>
<feature type="glycosylation site" description="O-linked (GalNAc...) threonine; alternate" evidence="30">
    <location>
        <position position="1402"/>
    </location>
</feature>
<feature type="glycosylation site" description="N-linked (GlcNAc...) asparagine" evidence="4">
    <location>
        <position position="1489"/>
    </location>
</feature>
<feature type="glycosylation site" description="N-linked (GlcNAc...) asparagine" evidence="4">
    <location>
        <position position="1587"/>
    </location>
</feature>
<feature type="disulfide bond" evidence="1">
    <location>
        <begin position="24"/>
        <end position="37"/>
    </location>
</feature>
<feature type="disulfide bond" evidence="1">
    <location>
        <begin position="31"/>
        <end position="46"/>
    </location>
</feature>
<feature type="disulfide bond" evidence="1">
    <location>
        <begin position="63"/>
        <end position="74"/>
    </location>
</feature>
<feature type="disulfide bond" evidence="1">
    <location>
        <begin position="68"/>
        <end position="87"/>
    </location>
</feature>
<feature type="disulfide bond" evidence="1">
    <location>
        <begin position="89"/>
        <end position="98"/>
    </location>
</feature>
<feature type="disulfide bond" evidence="1">
    <location>
        <begin position="106"/>
        <end position="117"/>
    </location>
</feature>
<feature type="disulfide bond" evidence="1">
    <location>
        <begin position="111"/>
        <end position="127"/>
    </location>
</feature>
<feature type="disulfide bond" evidence="1">
    <location>
        <begin position="129"/>
        <end position="138"/>
    </location>
</feature>
<feature type="disulfide bond" evidence="1">
    <location>
        <begin position="144"/>
        <end position="155"/>
    </location>
</feature>
<feature type="disulfide bond" evidence="1">
    <location>
        <begin position="149"/>
        <end position="164"/>
    </location>
</feature>
<feature type="disulfide bond" evidence="1">
    <location>
        <begin position="166"/>
        <end position="175"/>
    </location>
</feature>
<feature type="disulfide bond" evidence="1">
    <location>
        <begin position="182"/>
        <end position="195"/>
    </location>
</feature>
<feature type="disulfide bond" evidence="1">
    <location>
        <begin position="189"/>
        <end position="204"/>
    </location>
</feature>
<feature type="disulfide bond" evidence="1">
    <location>
        <begin position="206"/>
        <end position="215"/>
    </location>
</feature>
<feature type="disulfide bond" evidence="1">
    <location>
        <begin position="222"/>
        <end position="233"/>
    </location>
</feature>
<feature type="disulfide bond" evidence="1">
    <location>
        <begin position="227"/>
        <end position="243"/>
    </location>
</feature>
<feature type="disulfide bond" evidence="1">
    <location>
        <begin position="245"/>
        <end position="254"/>
    </location>
</feature>
<feature type="disulfide bond" evidence="1">
    <location>
        <begin position="261"/>
        <end position="272"/>
    </location>
</feature>
<feature type="disulfide bond" evidence="1">
    <location>
        <begin position="266"/>
        <end position="281"/>
    </location>
</feature>
<feature type="disulfide bond" evidence="1">
    <location>
        <begin position="283"/>
        <end position="292"/>
    </location>
</feature>
<feature type="disulfide bond" evidence="1">
    <location>
        <begin position="299"/>
        <end position="312"/>
    </location>
</feature>
<feature type="disulfide bond" evidence="1">
    <location>
        <begin position="306"/>
        <end position="321"/>
    </location>
</feature>
<feature type="disulfide bond" evidence="1">
    <location>
        <begin position="323"/>
        <end position="332"/>
    </location>
</feature>
<feature type="disulfide bond" evidence="1">
    <location>
        <begin position="339"/>
        <end position="350"/>
    </location>
</feature>
<feature type="disulfide bond" evidence="1">
    <location>
        <begin position="344"/>
        <end position="359"/>
    </location>
</feature>
<feature type="disulfide bond" evidence="1">
    <location>
        <begin position="361"/>
        <end position="370"/>
    </location>
</feature>
<feature type="disulfide bond" evidence="1">
    <location>
        <begin position="376"/>
        <end position="387"/>
    </location>
</feature>
<feature type="disulfide bond" evidence="1">
    <location>
        <begin position="381"/>
        <end position="398"/>
    </location>
</feature>
<feature type="disulfide bond" evidence="1">
    <location>
        <begin position="400"/>
        <end position="409"/>
    </location>
</feature>
<feature type="disulfide bond" evidence="3">
    <location>
        <begin position="416"/>
        <end position="429"/>
    </location>
</feature>
<feature type="disulfide bond" evidence="3">
    <location>
        <begin position="423"/>
        <end position="438"/>
    </location>
</feature>
<feature type="disulfide bond" evidence="3">
    <location>
        <begin position="440"/>
        <end position="449"/>
    </location>
</feature>
<feature type="disulfide bond" evidence="3">
    <location>
        <begin position="456"/>
        <end position="467"/>
    </location>
</feature>
<feature type="disulfide bond" evidence="3">
    <location>
        <begin position="461"/>
        <end position="476"/>
    </location>
</feature>
<feature type="disulfide bond" evidence="3">
    <location>
        <begin position="478"/>
        <end position="487"/>
    </location>
</feature>
<feature type="disulfide bond" evidence="3">
    <location>
        <begin position="494"/>
        <end position="505"/>
    </location>
</feature>
<feature type="disulfide bond" evidence="3">
    <location>
        <begin position="499"/>
        <end position="514"/>
    </location>
</feature>
<feature type="disulfide bond" evidence="3">
    <location>
        <begin position="516"/>
        <end position="525"/>
    </location>
</feature>
<feature type="disulfide bond" evidence="1">
    <location>
        <begin position="532"/>
        <end position="543"/>
    </location>
</feature>
<feature type="disulfide bond" evidence="1">
    <location>
        <begin position="537"/>
        <end position="552"/>
    </location>
</feature>
<feature type="disulfide bond" evidence="1">
    <location>
        <begin position="554"/>
        <end position="563"/>
    </location>
</feature>
<feature type="disulfide bond" evidence="1">
    <location>
        <begin position="570"/>
        <end position="580"/>
    </location>
</feature>
<feature type="disulfide bond" evidence="1">
    <location>
        <begin position="575"/>
        <end position="589"/>
    </location>
</feature>
<feature type="disulfide bond" evidence="1">
    <location>
        <begin position="591"/>
        <end position="600"/>
    </location>
</feature>
<feature type="disulfide bond" evidence="1">
    <location>
        <begin position="607"/>
        <end position="618"/>
    </location>
</feature>
<feature type="disulfide bond" evidence="1">
    <location>
        <begin position="612"/>
        <end position="627"/>
    </location>
</feature>
<feature type="disulfide bond" evidence="1">
    <location>
        <begin position="629"/>
        <end position="638"/>
    </location>
</feature>
<feature type="disulfide bond" evidence="1">
    <location>
        <begin position="645"/>
        <end position="655"/>
    </location>
</feature>
<feature type="disulfide bond" evidence="1">
    <location>
        <begin position="650"/>
        <end position="664"/>
    </location>
</feature>
<feature type="disulfide bond" evidence="1">
    <location>
        <begin position="666"/>
        <end position="675"/>
    </location>
</feature>
<feature type="disulfide bond" evidence="1">
    <location>
        <begin position="682"/>
        <end position="693"/>
    </location>
</feature>
<feature type="disulfide bond" evidence="1">
    <location>
        <begin position="687"/>
        <end position="702"/>
    </location>
</feature>
<feature type="disulfide bond" evidence="1">
    <location>
        <begin position="704"/>
        <end position="713"/>
    </location>
</feature>
<feature type="disulfide bond" evidence="1">
    <location>
        <begin position="720"/>
        <end position="730"/>
    </location>
</feature>
<feature type="disulfide bond" evidence="1">
    <location>
        <begin position="725"/>
        <end position="739"/>
    </location>
</feature>
<feature type="disulfide bond" evidence="1">
    <location>
        <begin position="741"/>
        <end position="750"/>
    </location>
</feature>
<feature type="disulfide bond" evidence="1">
    <location>
        <begin position="757"/>
        <end position="768"/>
    </location>
</feature>
<feature type="disulfide bond" evidence="1">
    <location>
        <begin position="762"/>
        <end position="777"/>
    </location>
</feature>
<feature type="disulfide bond" evidence="1">
    <location>
        <begin position="779"/>
        <end position="788"/>
    </location>
</feature>
<feature type="disulfide bond" evidence="1">
    <location>
        <begin position="795"/>
        <end position="806"/>
    </location>
</feature>
<feature type="disulfide bond" evidence="1">
    <location>
        <begin position="800"/>
        <end position="815"/>
    </location>
</feature>
<feature type="disulfide bond" evidence="1">
    <location>
        <begin position="817"/>
        <end position="826"/>
    </location>
</feature>
<feature type="disulfide bond" evidence="1">
    <location>
        <begin position="833"/>
        <end position="844"/>
    </location>
</feature>
<feature type="disulfide bond" evidence="1">
    <location>
        <begin position="838"/>
        <end position="855"/>
    </location>
</feature>
<feature type="disulfide bond" evidence="1">
    <location>
        <begin position="857"/>
        <end position="866"/>
    </location>
</feature>
<feature type="disulfide bond" evidence="1">
    <location>
        <begin position="873"/>
        <end position="884"/>
    </location>
</feature>
<feature type="disulfide bond" evidence="1">
    <location>
        <begin position="878"/>
        <end position="893"/>
    </location>
</feature>
<feature type="disulfide bond" evidence="1">
    <location>
        <begin position="895"/>
        <end position="904"/>
    </location>
</feature>
<feature type="disulfide bond" evidence="1">
    <location>
        <begin position="911"/>
        <end position="922"/>
    </location>
</feature>
<feature type="disulfide bond" evidence="1">
    <location>
        <begin position="916"/>
        <end position="931"/>
    </location>
</feature>
<feature type="disulfide bond" evidence="1">
    <location>
        <begin position="933"/>
        <end position="942"/>
    </location>
</feature>
<feature type="disulfide bond" evidence="1">
    <location>
        <begin position="949"/>
        <end position="960"/>
    </location>
</feature>
<feature type="disulfide bond" evidence="1">
    <location>
        <begin position="954"/>
        <end position="969"/>
    </location>
</feature>
<feature type="disulfide bond" evidence="1">
    <location>
        <begin position="971"/>
        <end position="980"/>
    </location>
</feature>
<feature type="disulfide bond" evidence="1">
    <location>
        <begin position="987"/>
        <end position="998"/>
    </location>
</feature>
<feature type="disulfide bond" evidence="1">
    <location>
        <begin position="992"/>
        <end position="1007"/>
    </location>
</feature>
<feature type="disulfide bond" evidence="1">
    <location>
        <begin position="1009"/>
        <end position="1018"/>
    </location>
</feature>
<feature type="disulfide bond" evidence="1">
    <location>
        <begin position="1025"/>
        <end position="1036"/>
    </location>
</feature>
<feature type="disulfide bond" evidence="1">
    <location>
        <begin position="1030"/>
        <end position="1045"/>
    </location>
</feature>
<feature type="disulfide bond" evidence="1">
    <location>
        <begin position="1047"/>
        <end position="1056"/>
    </location>
</feature>
<feature type="disulfide bond" evidence="1">
    <location>
        <begin position="1063"/>
        <end position="1074"/>
    </location>
</feature>
<feature type="disulfide bond" evidence="1">
    <location>
        <begin position="1068"/>
        <end position="1083"/>
    </location>
</feature>
<feature type="disulfide bond" evidence="1">
    <location>
        <begin position="1085"/>
        <end position="1094"/>
    </location>
</feature>
<feature type="disulfide bond" evidence="38">
    <location>
        <begin position="1101"/>
        <end position="1122"/>
    </location>
</feature>
<feature type="disulfide bond" evidence="1">
    <location>
        <begin position="1116"/>
        <end position="1131"/>
    </location>
</feature>
<feature type="disulfide bond" evidence="1">
    <location>
        <begin position="1133"/>
        <end position="1142"/>
    </location>
</feature>
<feature type="disulfide bond" evidence="1">
    <location>
        <begin position="1149"/>
        <end position="1160"/>
    </location>
</feature>
<feature type="disulfide bond" evidence="1">
    <location>
        <begin position="1154"/>
        <end position="1169"/>
    </location>
</feature>
<feature type="disulfide bond" evidence="1">
    <location>
        <begin position="1171"/>
        <end position="1180"/>
    </location>
</feature>
<feature type="disulfide bond" evidence="1">
    <location>
        <begin position="1187"/>
        <end position="1198"/>
    </location>
</feature>
<feature type="disulfide bond" evidence="1">
    <location>
        <begin position="1192"/>
        <end position="1207"/>
    </location>
</feature>
<feature type="disulfide bond" evidence="1">
    <location>
        <begin position="1209"/>
        <end position="1218"/>
    </location>
</feature>
<feature type="disulfide bond" evidence="1">
    <location>
        <begin position="1225"/>
        <end position="1244"/>
    </location>
</feature>
<feature type="disulfide bond" evidence="1">
    <location>
        <begin position="1238"/>
        <end position="1253"/>
    </location>
</feature>
<feature type="disulfide bond" evidence="1">
    <location>
        <begin position="1255"/>
        <end position="1264"/>
    </location>
</feature>
<feature type="disulfide bond" evidence="1">
    <location>
        <begin position="1271"/>
        <end position="1284"/>
    </location>
</feature>
<feature type="disulfide bond" evidence="1">
    <location>
        <begin position="1276"/>
        <end position="1293"/>
    </location>
</feature>
<feature type="disulfide bond" evidence="1">
    <location>
        <begin position="1295"/>
        <end position="1304"/>
    </location>
</feature>
<feature type="disulfide bond" evidence="1">
    <location>
        <begin position="1311"/>
        <end position="1322"/>
    </location>
</feature>
<feature type="disulfide bond" evidence="1">
    <location>
        <begin position="1316"/>
        <end position="1334"/>
    </location>
</feature>
<feature type="disulfide bond" evidence="1">
    <location>
        <begin position="1336"/>
        <end position="1345"/>
    </location>
</feature>
<feature type="disulfide bond" evidence="1">
    <location>
        <begin position="1352"/>
        <end position="1363"/>
    </location>
</feature>
<feature type="disulfide bond" evidence="1">
    <location>
        <begin position="1357"/>
        <end position="1372"/>
    </location>
</feature>
<feature type="disulfide bond" evidence="1">
    <location>
        <begin position="1374"/>
        <end position="1383"/>
    </location>
</feature>
<feature type="disulfide bond" evidence="1">
    <location>
        <begin position="1391"/>
        <end position="1403"/>
    </location>
</feature>
<feature type="disulfide bond" evidence="1">
    <location>
        <begin position="1397"/>
        <end position="1414"/>
    </location>
</feature>
<feature type="disulfide bond" evidence="1">
    <location>
        <begin position="1416"/>
        <end position="1425"/>
    </location>
</feature>
<feature type="disulfide bond" evidence="1">
    <location>
        <begin position="1449"/>
        <end position="1472"/>
    </location>
</feature>
<feature type="disulfide bond" evidence="1">
    <location>
        <begin position="1454"/>
        <end position="1467"/>
    </location>
</feature>
<feature type="disulfide bond" evidence="1">
    <location>
        <begin position="1463"/>
        <end position="1479"/>
    </location>
</feature>
<feature type="disulfide bond" evidence="1">
    <location>
        <begin position="1490"/>
        <end position="1514"/>
    </location>
</feature>
<feature type="disulfide bond" evidence="1">
    <location>
        <begin position="1496"/>
        <end position="1509"/>
    </location>
</feature>
<feature type="disulfide bond" evidence="1">
    <location>
        <begin position="1505"/>
        <end position="1521"/>
    </location>
</feature>
<feature type="disulfide bond" evidence="1">
    <location>
        <begin position="1536"/>
        <end position="1549"/>
    </location>
</feature>
<feature type="disulfide bond" evidence="1">
    <location>
        <begin position="1545"/>
        <end position="1561"/>
    </location>
</feature>
<feature type="cross-link" description="Glycyl lysine isopeptide (Lys-Gly) (interchain with G-Cter in ubiquitin)" evidence="17">
    <location>
        <position position="1749"/>
    </location>
</feature>
<feature type="splice variant" id="VSP_043065" description="In isoform 4." evidence="38">
    <original>MPRLLTPLLCLTLLPALAARGLRCSQPSGTCLNGGRCEVANGTEACV</original>
    <variation>MQTPLLSLAGATTELCFLPASVLASSLPGPSL</variation>
    <location>
        <begin position="1"/>
        <end position="47"/>
    </location>
</feature>
<feature type="splice variant" id="VSP_043064" description="In isoform 3." evidence="38">
    <original>MPRLLTPLLCLTLLPALAARG</original>
    <variation>MKNSNTLTNKWRMEQC</variation>
    <location>
        <begin position="1"/>
        <end position="21"/>
    </location>
</feature>
<feature type="splice variant" id="VSP_001402" description="In isoform 2." evidence="36">
    <location>
        <begin position="857"/>
        <end position="914"/>
    </location>
</feature>
<feature type="splice variant" id="VSP_001403" description="In isoform 2." evidence="36">
    <location>
        <begin position="1329"/>
        <end position="1355"/>
    </location>
</feature>
<feature type="splice variant" id="VSP_001404" description="In isoform 2." evidence="36">
    <location>
        <begin position="1636"/>
        <end position="1854"/>
    </location>
</feature>
<feature type="mutagenesis site" description="No effect." evidence="24">
    <original>S</original>
    <variation>A</variation>
    <location>
        <position position="65"/>
    </location>
</feature>
<feature type="mutagenesis site" description="No effect." evidence="24">
    <original>S</original>
    <variation>A</variation>
    <location>
        <position position="146"/>
    </location>
</feature>
<feature type="mutagenesis site" description="No significant effect on its binding and activation by DLL1 or JAG1. No significant effect on RFNG-, LFNG- and MFNG-mediated enhancement of its activation by DLL1. Decrease in LFNG- and MFNG-mediated inhibition of its activation by JAG1. Significant decrease in LFNG- and MFNG-mediated inhibition of its activation by JAG1; when associated with V-1402." evidence="30">
    <original>T</original>
    <variation>V</variation>
    <location>
        <position position="232"/>
    </location>
</feature>
<feature type="mutagenesis site" description="Significant loss of binding and activation by DLL1 or JAG1. Decrease in RFNG-, LFNG- and MFNG-mediated enhancement of its activation by DLL1. Decrease in LFNG-mediated inhibition of its activation by JAG1. Significant loss of binding and activation by DLL1 or JAG1 and complete loss of RFNG- and LFNG-mediated enhancement of its activation by DLL1; when associated with V-466. Decreased localization to the plasma membrane; when associated with A-435." evidence="30 32">
    <original>T</original>
    <variation>V</variation>
    <location>
        <position position="311"/>
    </location>
</feature>
<feature type="mutagenesis site" description="No effect." evidence="24">
    <original>S</original>
    <variation>A</variation>
    <location>
        <position position="341"/>
    </location>
</feature>
<feature type="mutagenesis site" description="Reduced binding and activation by JAG1 but not DLL1. Decrease in MFNG-mediated enhancement of its activation by DLL1." evidence="30">
    <original>T</original>
    <variation>V</variation>
    <location>
        <position position="349"/>
    </location>
</feature>
<feature type="mutagenesis site" description="No effect." evidence="24">
    <original>S</original>
    <variation>A</variation>
    <location>
        <position position="378"/>
    </location>
</feature>
<feature type="mutagenesis site" description="No effect on localization to the plasma membrane. No effect on binding and activation by DLL1. Decreased localization to the plasma membrane; when associated with V-311." evidence="32">
    <original>S</original>
    <variation>A</variation>
    <location>
        <position position="435"/>
    </location>
</feature>
<feature type="mutagenesis site" description="No effect." evidence="24">
    <original>S</original>
    <variation>A</variation>
    <location>
        <position position="458"/>
    </location>
</feature>
<feature type="mutagenesis site" description="Reduced binding and activation by DLL1 but not JAG1. Decrease in RFNG- and LFNG-mediated enhancement of its activation by DLL1. Loss of RFNG-mediated enhancement of its activation by JAG1. Significant loss of binding and activation by DLL1 or JAG1 and complete loss of RFNG- and LFNG-mediated enhancement of its activation by DLL1; when associated with V-311." evidence="30">
    <original>T</original>
    <variation>V</variation>
    <location>
        <position position="466"/>
    </location>
</feature>
<feature type="mutagenesis site" description="No effect." evidence="24">
    <original>S</original>
    <variation>A</variation>
    <location>
        <position position="496"/>
    </location>
</feature>
<feature type="mutagenesis site" description="No effect." evidence="24">
    <original>S</original>
    <variation>A</variation>
    <location>
        <position position="534"/>
    </location>
</feature>
<feature type="mutagenesis site" description="No effect." evidence="24">
    <original>S</original>
    <variation>A</variation>
    <location>
        <position position="609"/>
    </location>
</feature>
<feature type="mutagenesis site" description="No effect." evidence="24">
    <original>S</original>
    <variation>A</variation>
    <location>
        <position position="647"/>
    </location>
</feature>
<feature type="mutagenesis site" description="No effect." evidence="24">
    <original>S</original>
    <variation>A</variation>
    <location>
        <position position="722"/>
    </location>
</feature>
<feature type="mutagenesis site" description="No effect." evidence="24">
    <original>S</original>
    <variation>A</variation>
    <location>
        <position position="759"/>
    </location>
</feature>
<feature type="mutagenesis site" description="No effect." evidence="24">
    <original>S</original>
    <variation>A</variation>
    <location>
        <position position="797"/>
    </location>
</feature>
<feature type="mutagenesis site" description="No effect." evidence="24">
    <original>S</original>
    <variation>A</variation>
    <location>
        <position position="951"/>
    </location>
</feature>
<feature type="mutagenesis site" description="Reduced binding and activation by DLL1 but not JAG1. No effect on RFNG-, LFNG- and MFNG-mediated enhancement of its activation by DLL1. No effect on LFNG- and MFNG-mediated inhibition of its activation by JAG1." evidence="30">
    <original>T</original>
    <variation>V</variation>
    <location>
        <position position="997"/>
    </location>
</feature>
<feature type="mutagenesis site" description="No effect." evidence="24">
    <original>S</original>
    <variation>A</variation>
    <location>
        <position position="1027"/>
    </location>
</feature>
<feature type="mutagenesis site" description="Reduced binding and activation by JAG1 but not DLL1. No effect on RFNG-, LFNG- and MFNG-mediated enhancement of its activation by DLL1. No effect on LFNG- and MFNG-mediated inhibition of its activation by JAG1." evidence="30">
    <original>T</original>
    <variation>V</variation>
    <location>
        <position position="1035"/>
    </location>
</feature>
<feature type="mutagenesis site" description="Reduced activity." evidence="24">
    <original>S</original>
    <variation>A</variation>
    <location>
        <position position="1065"/>
    </location>
</feature>
<feature type="mutagenesis site" description="No significant effect on its binding and activation by DLL1 or JAG1. No effect on RFNG-, LFNG- and MFNG-mediated enhancement of its activation by DLL1. No effect on LFNG- and MFNG-mediated inhibition of its activation by JAG1." evidence="30">
    <original>T</original>
    <variation>V</variation>
    <location>
        <position position="1159"/>
    </location>
</feature>
<feature type="mutagenesis site" description="No effect." evidence="24">
    <original>S</original>
    <variation>A</variation>
    <location>
        <position position="1189"/>
    </location>
</feature>
<feature type="mutagenesis site" description="No effect." evidence="24">
    <original>S</original>
    <variation>A</variation>
    <location>
        <position position="1273"/>
    </location>
</feature>
<feature type="mutagenesis site" description="No significant effect on its binding and activation by DLL1 or JAG1. No effect on RFNG-, LFNG- and MFNG-mediated enhancement of its activation by DLL1. No effect on LFNG- and MFNG-mediated inhibition of its activation by JAG1." evidence="30">
    <original>T</original>
    <variation>V</variation>
    <location>
        <position position="1362"/>
    </location>
</feature>
<feature type="mutagenesis site" description="No significant effect on its binding and activation by DLL1 or JAG1. No effect on RFNG-, LFNG- and MFNG-mediated enhancement of its activation by DLL1. Decrease in LFNG- and MFNG-mediated inhibition of its activation by JAG1. Significant decrease in LFNG- and MFNG-mediated inhibition of its activation by JAG1; when associated with V-232." evidence="30">
    <original>T</original>
    <variation>V</variation>
    <location>
        <position position="1402"/>
    </location>
</feature>
<feature type="mutagenesis site" description="Processing by furin-like convertase abolished." evidence="34">
    <original>RQRR</original>
    <variation>AAAA</variation>
    <location>
        <begin position="1651"/>
        <end position="1654"/>
    </location>
</feature>
<feature type="mutagenesis site" description="Produces an activated, ligand-independent molecule; when associated with S-1682." evidence="8">
    <original>C</original>
    <variation>S</variation>
    <location>
        <position position="1675"/>
    </location>
</feature>
<feature type="mutagenesis site" description="Produces an activated, ligand-independent molecule; when associated with S-1675." evidence="8">
    <original>C</original>
    <variation>S</variation>
    <location>
        <position position="1682"/>
    </location>
</feature>
<feature type="mutagenesis site" description="NICD processing severely reduced.">
    <original>V</original>
    <variation>L</variation>
    <location>
        <position position="1744"/>
    </location>
</feature>
<feature type="mutagenesis site" description="Reduced ability to promote HIF1AN-dependent 2-oxoglutarate decarboxylation and greatly reduced transactivation capacity. Abolished ability to promote HIF1AN-dependent 2-oxoglutarate decarboxylation; when associated with G-2012. Almost abolished transactivation capacity; when associated with A-2012." evidence="19 20">
    <original>N</original>
    <variation>A</variation>
    <location>
        <position position="1945"/>
    </location>
</feature>
<feature type="mutagenesis site" description="Slightly reduced ability to promote HIF1AN-dependent 2-oxoglutarate decarboxylation. Abolished ability to promote HIF1AN-dependent 2-oxoglutarate decarboxylation and almost abolished transactivation capacity; when associated with A-1945." evidence="19 20">
    <original>N</original>
    <variation>A</variation>
    <location>
        <position position="2012"/>
    </location>
</feature>
<feature type="mutagenesis site" description="Reduced ability to promote HIF1AN-dependent 2-oxoglutarate decarboxylation. Abolished ability to promote HIF1AN-dependent 2-oxoglutarate decarboxylation; when associated with A-1945." evidence="19 20">
    <original>N</original>
    <variation>G</variation>
    <location>
        <position position="2012"/>
    </location>
</feature>
<feature type="sequence conflict" description="In Ref. 1; CAA77941." evidence="38" ref="1">
    <original>L</original>
    <variation>R</variation>
    <location>
        <position position="17"/>
    </location>
</feature>
<feature type="sequence conflict" description="In Ref. 1; CAA77941 and 3; AAM28905." evidence="38" ref="1 3">
    <original>N</original>
    <variation>S</variation>
    <location>
        <position position="41"/>
    </location>
</feature>
<feature type="sequence conflict" description="In Ref. 1; CAA77941." evidence="38" ref="1">
    <original>C</original>
    <variation>A</variation>
    <location>
        <position position="48"/>
    </location>
</feature>
<feature type="sequence conflict" description="In Ref. 1; CAA77941." evidence="38" ref="1">
    <original>A</original>
    <variation>S</variation>
    <location>
        <position position="51"/>
    </location>
</feature>
<feature type="sequence conflict" description="In Ref. 1; CAA77941." evidence="38" ref="1">
    <original>S</original>
    <variation>P</variation>
    <location>
        <position position="60"/>
    </location>
</feature>
<feature type="sequence conflict" description="In Ref. 1; CAA77941." evidence="38" ref="1">
    <original>P</original>
    <variation>R</variation>
    <location>
        <position position="67"/>
    </location>
</feature>
<feature type="sequence conflict" description="In Ref. 1; CAA77941." evidence="38" ref="1">
    <original>H</original>
    <variation>Y</variation>
    <location>
        <position position="75"/>
    </location>
</feature>
<feature type="sequence conflict" description="In Ref. 1; CAA77941." evidence="38" ref="1">
    <original>T</original>
    <variation>I</variation>
    <location>
        <position position="82"/>
    </location>
</feature>
<feature type="sequence conflict" description="In Ref. 1; CAA77941." evidence="38" ref="1">
    <original>NA</original>
    <variation>KP</variation>
    <location>
        <begin position="104"/>
        <end position="105"/>
    </location>
</feature>
<feature type="sequence conflict" description="In Ref. 1; CAA77941." evidence="38" ref="1">
    <original>P</original>
    <variation>S</variation>
    <location>
        <position position="130"/>
    </location>
</feature>
<feature type="sequence conflict" description="In Ref. 1; CAA77941." evidence="38" ref="1">
    <original>T</original>
    <variation>H</variation>
    <location>
        <position position="194"/>
    </location>
</feature>
<feature type="sequence conflict" description="In Ref. 1; CAA77941." evidence="38" ref="1">
    <original>R</original>
    <variation>C</variation>
    <location>
        <position position="207"/>
    </location>
</feature>
<feature type="sequence conflict" description="In Ref. 1; CAA77941." evidence="38" ref="1">
    <original>G</original>
    <variation>A</variation>
    <location>
        <position position="231"/>
    </location>
</feature>
<feature type="sequence conflict" description="In Ref. 1; CAA77941." evidence="38" ref="1">
    <original>W</original>
    <variation>V</variation>
    <location>
        <position position="287"/>
    </location>
</feature>
<feature type="sequence conflict" description="In Ref. 1; CAA77941." evidence="38" ref="1">
    <original>G</original>
    <variation>A</variation>
    <location>
        <position position="309"/>
    </location>
</feature>
<feature type="sequence conflict" description="In Ref. 1; CAA77941." evidence="38" ref="1">
    <original>ND</original>
    <variation>KH</variation>
    <location>
        <begin position="373"/>
        <end position="374"/>
    </location>
</feature>
<feature type="sequence conflict" description="In Ref. 1; CAA77941." evidence="38" ref="1">
    <original>A</original>
    <variation>R</variation>
    <location>
        <position position="396"/>
    </location>
</feature>
<feature type="sequence conflict" description="In Ref. 1; CAA77941." evidence="38" ref="1">
    <original>A</original>
    <variation>D</variation>
    <location>
        <position position="417"/>
    </location>
</feature>
<feature type="sequence conflict" description="In Ref. 1; CAA77941." evidence="38" ref="1">
    <original>P</original>
    <variation>R</variation>
    <location>
        <position position="422"/>
    </location>
</feature>
<feature type="sequence conflict" description="In Ref. 1; CAA77941." evidence="38" ref="1">
    <original>R</original>
    <variation>G</variation>
    <location>
        <position position="448"/>
    </location>
</feature>
<feature type="sequence conflict" description="In Ref. 1; CAA77941." evidence="38" ref="1">
    <original>N</original>
    <variation>H</variation>
    <location>
        <position position="510"/>
    </location>
</feature>
<feature type="sequence conflict" description="In Ref. 8; AAK14898." evidence="38" ref="8">
    <original>T</original>
    <variation>I</variation>
    <location>
        <position position="835"/>
    </location>
</feature>
<feature type="sequence conflict" description="In Ref. 8; AAK14898." evidence="38" ref="8">
    <original>CL</original>
    <variation>SV</variation>
    <location>
        <begin position="933"/>
        <end position="934"/>
    </location>
</feature>
<feature type="sequence conflict" description="In Ref. 8; AAK14898." evidence="38" ref="8">
    <original>G</original>
    <variation>R</variation>
    <location>
        <position position="1050"/>
    </location>
</feature>
<feature type="sequence conflict" description="In Ref. 8; AAK14898." evidence="38" ref="8">
    <location>
        <begin position="1104"/>
        <end position="1106"/>
    </location>
</feature>
<feature type="sequence conflict" description="In Ref. 8; AAK14898." evidence="38" ref="8">
    <original>Q</original>
    <variation>L</variation>
    <location>
        <position position="1155"/>
    </location>
</feature>
<feature type="sequence conflict" description="In Ref. 8; AAK14898." evidence="38" ref="8">
    <original>C</original>
    <variation>W</variation>
    <location>
        <position position="1209"/>
    </location>
</feature>
<feature type="sequence conflict" description="In Ref. 1; CAA77941." evidence="38" ref="1">
    <original>R</original>
    <variation>P</variation>
    <location>
        <position position="1438"/>
    </location>
</feature>
<feature type="sequence conflict" description="In Ref. 8; AAK14898." evidence="38" ref="8">
    <original>C</original>
    <variation>S</variation>
    <location>
        <position position="1545"/>
    </location>
</feature>
<feature type="sequence conflict" description="In Ref. 8; AAK14898." evidence="38" ref="8">
    <original>W</original>
    <variation>R</variation>
    <location>
        <position position="1556"/>
    </location>
</feature>
<feature type="sequence conflict" description="In Ref. 8; AAK14898." evidence="38" ref="8">
    <original>G</original>
    <variation>R</variation>
    <location>
        <position position="1572"/>
    </location>
</feature>
<feature type="sequence conflict" description="In Ref. 8; AAK14898." evidence="38" ref="8">
    <original>L</original>
    <variation>V</variation>
    <location>
        <position position="1576"/>
    </location>
</feature>
<feature type="sequence conflict" description="In Ref. 8; AAK14898." evidence="38" ref="8">
    <original>D</original>
    <variation>H</variation>
    <location>
        <position position="1609"/>
    </location>
</feature>
<feature type="sequence conflict" description="In Ref. 10; BAE32653." evidence="38" ref="10">
    <original>I</original>
    <variation>T</variation>
    <location>
        <position position="1661"/>
    </location>
</feature>
<feature type="sequence conflict" description="In Ref. 8; AAK14898." evidence="38" ref="8">
    <original>V</original>
    <variation>D</variation>
    <location>
        <position position="1864"/>
    </location>
</feature>
<feature type="sequence conflict" description="In Ref. 8; AAK14898." evidence="38" ref="8">
    <original>S</original>
    <variation>R</variation>
    <location>
        <position position="1890"/>
    </location>
</feature>
<feature type="sequence conflict" description="In Ref. 8; AAK14898." evidence="38" ref="8">
    <original>APA</original>
    <variation>RPG</variation>
    <location>
        <begin position="1896"/>
        <end position="1898"/>
    </location>
</feature>
<feature type="sequence conflict" description="In Ref. 1; CAA77941." evidence="38" ref="1">
    <original>AA</original>
    <variation>RR</variation>
    <location>
        <begin position="1933"/>
        <end position="1934"/>
    </location>
</feature>
<feature type="sequence conflict" description="In Ref. 1; CAA77941." evidence="38" ref="1">
    <location>
        <position position="1938"/>
    </location>
</feature>
<feature type="sequence conflict" description="In Ref. 3; AAM28905." evidence="38" ref="3">
    <original>V</original>
    <variation>L</variation>
    <location>
        <position position="1997"/>
    </location>
</feature>
<feature type="sequence conflict" description="In Ref. 1; CAA77941." evidence="38" ref="1">
    <original>MQ</original>
    <variation>IE</variation>
    <location>
        <begin position="2046"/>
        <end position="2047"/>
    </location>
</feature>
<feature type="sequence conflict" description="In Ref. 1; CAA77941." evidence="38" ref="1">
    <original>P</original>
    <variation>S</variation>
    <location>
        <position position="2054"/>
    </location>
</feature>
<feature type="sequence conflict" description="In Ref. 1; CAA77941." evidence="38" ref="1">
    <original>AAREG</original>
    <variation>SIRRE</variation>
    <location>
        <begin position="2058"/>
        <end position="2062"/>
    </location>
</feature>
<feature type="sequence conflict" description="In Ref. 16; CAA57909." evidence="38" ref="16">
    <original>A</original>
    <variation>G</variation>
    <location>
        <position position="2075"/>
    </location>
</feature>
<feature type="sequence conflict" description="In Ref. 10; BAE34095." evidence="38" ref="10">
    <original>L</original>
    <variation>M</variation>
    <location>
        <position position="2086"/>
    </location>
</feature>
<feature type="sequence conflict" description="In Ref. 1; CAA77941." evidence="38" ref="1">
    <original>L</original>
    <variation>P</variation>
    <location>
        <position position="2136"/>
    </location>
</feature>
<feature type="sequence conflict" description="In Ref. 1; CAA77941." evidence="38" ref="1">
    <original>K</original>
    <variation>S</variation>
    <location>
        <position position="2172"/>
    </location>
</feature>
<feature type="sequence conflict" description="In Ref. 1; CAA77941." evidence="38" ref="1">
    <original>C</original>
    <variation>W</variation>
    <location>
        <position position="2179"/>
    </location>
</feature>
<feature type="sequence conflict" description="In Ref. 1; CAA77941." evidence="38" ref="1">
    <original>S</original>
    <variation>SS</variation>
    <location>
        <position position="2185"/>
    </location>
</feature>
<feature type="sequence conflict" description="In Ref. 1; CAA77941." evidence="38" ref="1">
    <original>P</original>
    <variation>H</variation>
    <location>
        <position position="2206"/>
    </location>
</feature>
<feature type="sequence conflict" description="In Ref. 1; CAA77941." evidence="38" ref="1">
    <original>P</original>
    <variation>H</variation>
    <location>
        <position position="2258"/>
    </location>
</feature>
<feature type="sequence conflict" description="In Ref. 1; CAA77941." evidence="38" ref="1">
    <original>S</original>
    <variation>C</variation>
    <location>
        <position position="2273"/>
    </location>
</feature>
<feature type="sequence conflict" description="In Ref. 10; BAE34095." evidence="38" ref="10">
    <original>N</original>
    <variation>S</variation>
    <location>
        <position position="2347"/>
    </location>
</feature>
<feature type="sequence conflict" description="In Ref. 1; CAA77941." evidence="38" ref="1">
    <original>Q</original>
    <variation>P</variation>
    <location>
        <position position="2380"/>
    </location>
</feature>
<feature type="sequence conflict" description="In Ref. 1; CAA77941." evidence="38" ref="1">
    <original>HP</original>
    <variation>PT</variation>
    <location>
        <begin position="2483"/>
        <end position="2484"/>
    </location>
</feature>
<feature type="helix" evidence="49">
    <location>
        <begin position="456"/>
        <end position="458"/>
    </location>
</feature>
<feature type="strand" evidence="47">
    <location>
        <begin position="462"/>
        <end position="464"/>
    </location>
</feature>
<feature type="strand" evidence="49">
    <location>
        <begin position="466"/>
        <end position="469"/>
    </location>
</feature>
<feature type="strand" evidence="48">
    <location>
        <begin position="470"/>
        <end position="472"/>
    </location>
</feature>
<feature type="strand" evidence="49">
    <location>
        <begin position="474"/>
        <end position="477"/>
    </location>
</feature>
<feature type="strand" evidence="49">
    <location>
        <begin position="482"/>
        <end position="484"/>
    </location>
</feature>
<feature type="strand" evidence="50">
    <location>
        <begin position="997"/>
        <end position="1000"/>
    </location>
</feature>
<feature type="strand" evidence="50">
    <location>
        <begin position="1005"/>
        <end position="1008"/>
    </location>
</feature>
<feature type="strand" evidence="50">
    <location>
        <begin position="1013"/>
        <end position="1015"/>
    </location>
</feature>
<feature type="helix" evidence="51">
    <location>
        <begin position="1453"/>
        <end position="1457"/>
    </location>
</feature>
<feature type="strand" evidence="51">
    <location>
        <begin position="1460"/>
        <end position="1462"/>
    </location>
</feature>
<feature type="helix" evidence="51">
    <location>
        <begin position="1465"/>
        <end position="1467"/>
    </location>
</feature>
<feature type="turn" evidence="51">
    <location>
        <begin position="1470"/>
        <end position="1472"/>
    </location>
</feature>
<feature type="helix" evidence="51">
    <location>
        <begin position="1473"/>
        <end position="1476"/>
    </location>
</feature>
<feature type="turn" evidence="51">
    <location>
        <begin position="1477"/>
        <end position="1482"/>
    </location>
</feature>
<feature type="turn" evidence="51">
    <location>
        <begin position="1486"/>
        <end position="1489"/>
    </location>
</feature>
<feature type="helix" evidence="51">
    <location>
        <begin position="1492"/>
        <end position="1494"/>
    </location>
</feature>
<feature type="helix" evidence="51">
    <location>
        <begin position="1496"/>
        <end position="1498"/>
    </location>
</feature>
<feature type="turn" evidence="51">
    <location>
        <begin position="1499"/>
        <end position="1501"/>
    </location>
</feature>
<feature type="strand" evidence="51">
    <location>
        <begin position="1502"/>
        <end position="1504"/>
    </location>
</feature>
<feature type="helix" evidence="51">
    <location>
        <begin position="1507"/>
        <end position="1509"/>
    </location>
</feature>
<feature type="helix" evidence="51">
    <location>
        <begin position="1512"/>
        <end position="1519"/>
    </location>
</feature>
<feature type="helix" evidence="51">
    <location>
        <begin position="1530"/>
        <end position="1539"/>
    </location>
</feature>
<feature type="strand" evidence="51">
    <location>
        <begin position="1542"/>
        <end position="1544"/>
    </location>
</feature>
<feature type="helix" evidence="51">
    <location>
        <begin position="1547"/>
        <end position="1549"/>
    </location>
</feature>
<feature type="helix" evidence="51">
    <location>
        <begin position="1552"/>
        <end position="1559"/>
    </location>
</feature>
<feature type="strand" evidence="51">
    <location>
        <begin position="1571"/>
        <end position="1580"/>
    </location>
</feature>
<feature type="helix" evidence="51">
    <location>
        <begin position="1582"/>
        <end position="1587"/>
    </location>
</feature>
<feature type="helix" evidence="51">
    <location>
        <begin position="1589"/>
        <end position="1600"/>
    </location>
</feature>
<feature type="strand" evidence="51">
    <location>
        <begin position="1602"/>
        <end position="1606"/>
    </location>
</feature>
<feature type="strand" evidence="51">
    <location>
        <begin position="1616"/>
        <end position="1619"/>
    </location>
</feature>
<feature type="strand" evidence="51">
    <location>
        <begin position="1663"/>
        <end position="1671"/>
    </location>
</feature>
<feature type="helix" evidence="51">
    <location>
        <begin position="1675"/>
        <end position="1678"/>
    </location>
</feature>
<feature type="helix" evidence="51">
    <location>
        <begin position="1686"/>
        <end position="1698"/>
    </location>
</feature>
<feature type="strand" evidence="51">
    <location>
        <begin position="1704"/>
        <end position="1706"/>
    </location>
</feature>
<feature type="strand" evidence="51">
    <location>
        <begin position="1708"/>
        <end position="1714"/>
    </location>
</feature>
<feature type="helix" evidence="46">
    <location>
        <begin position="1921"/>
        <end position="1927"/>
    </location>
</feature>
<feature type="helix" evidence="46">
    <location>
        <begin position="1931"/>
        <end position="1939"/>
    </location>
</feature>
<feature type="helix" evidence="46">
    <location>
        <begin position="1954"/>
        <end position="1961"/>
    </location>
</feature>
<feature type="helix" evidence="46">
    <location>
        <begin position="1964"/>
        <end position="1972"/>
    </location>
</feature>
<feature type="helix" evidence="45">
    <location>
        <begin position="1975"/>
        <end position="1977"/>
    </location>
</feature>
<feature type="helix" evidence="45">
    <location>
        <begin position="1988"/>
        <end position="1995"/>
    </location>
</feature>
<feature type="helix" evidence="45">
    <location>
        <begin position="2000"/>
        <end position="2006"/>
    </location>
</feature>
<feature type="helix" evidence="45">
    <location>
        <begin position="2021"/>
        <end position="2027"/>
    </location>
</feature>
<feature type="helix" evidence="45">
    <location>
        <begin position="2031"/>
        <end position="2039"/>
    </location>
</feature>
<feature type="helix" evidence="45">
    <location>
        <begin position="2054"/>
        <end position="2061"/>
    </location>
</feature>
<feature type="helix" evidence="45">
    <location>
        <begin position="2064"/>
        <end position="2072"/>
    </location>
</feature>
<feature type="helix" evidence="45">
    <location>
        <begin position="2087"/>
        <end position="2093"/>
    </location>
</feature>
<feature type="helix" evidence="45">
    <location>
        <begin position="2097"/>
        <end position="2103"/>
    </location>
</feature>
<comment type="function">
    <text evidence="18 20 26 27">Functions as a receptor for membrane-bound ligands Jagged-1 (JAG1), Jagged-2 (JAG2) and Delta-1 (DLL1) to regulate cell-fate determination. Upon ligand activation through the released notch intracellular domain (NICD) it forms a transcriptional activator complex with RBPJ/RBPSUH and activates genes of the enhancer of split locus. Affects the implementation of differentiation, proliferation and apoptotic programs. Involved in angiogenesis; negatively regulates endothelial cell proliferation and migration and angiogenic sprouting. Involved in the maturation of both CD4(+) and CD8(+) cells in the thymus. Important for follicular differentiation and possibly cell fate selection within the follicle. During cerebellar development, functions as a receptor for neuronal DNER and is involved in the differentiation of Bergmann glia. Represses neuronal and myogenic differentiation. May play an essential role in postimplantation development, probably in some aspect of cell specification and/or differentiation. May be involved in mesoderm development, somite formation and neurogenesis. May enhance HIF1A function by sequestering HIF1AN away from HIF1A. Required for the THBS4 function in regulating protective astrogenesis from the subventricular zone (SVZ) niche after injury. Involved in determination of left/right symmetry by modulating the balance between motile and immotile (sensory) cilia at the left-right organiser (LRO).</text>
</comment>
<comment type="subunit">
    <text evidence="2 3 10 13 16 18 19 20 21 23 26 27 29 30 31">Heterodimer of a C-terminal fragment N(TM) and an N-terminal fragment N(EC) which are probably linked by disulfide bonds. Interacts with DNER, DTX1, DTX2 and RBPJ/RBPSUH. Also interacts with MAML1, MAML2 and MAML3 which act as transcriptional coactivators for NOTCH1. Notch 1 intracellular domain interacts with SNW1; the interaction involves multimerized NOTCH1 NICD and is implicated in a formation of an intermediate preactivation complex which associates with DNA-bound CBF-1/RBPJ. The activated membrane-bound form interacts with AAK1 which promotes NOTCH1 stabilization. Forms a trimeric complex with FBXW7 and SGK1. Interacts with HIF1AN. HIF1AN negatively regulates the function of notch intracellular domain (NICD), accelerating myogenic differentiation. Interacts (via NICD) with SNAI1 (via zinc fingers); the interaction induces SNAI1 degradation via MDM2-mediated ubiquitination and inhibits SNAI1-induced cell invasion. Interacts (via NICD) with MDM2A. Interacts (via NICD) with BCL6; the interaction decreases MAML1 recruitment by NOTCH1 NICD on target genes DNA and inhibits NOTCH1 transactivation activity. Interacts with THBS4. Interacts (via the EGF-like repeat region) with CCN3 (via CTCK domain) (PubMed:12050162). Interacts (via EGF-like domains) with DLL4 (via N-terminal DSL and MNNL domains) (By similarity). Interacts with ZMIZ1. Interacts (via NICD domain) with MEGF10 (via the cytoplasmic domain) (PubMed:28498977). Interacts with DLL1 and JAG1 (PubMed:28089369). Interacts (via NICD domain) with PRAG1 (PubMed:25038227). Forms a complex with PRAG1, N1ICD and MAML1, in a MAML1-dependent manner (PubMed:25038227). Interacts (via transmembrane region) with PSEN1; the interaction is direct (By similarity). Interacts with ZFP64 (PubMed:18430783).</text>
</comment>
<comment type="interaction">
    <interactant intactId="EBI-1392707">
        <id>Q01705</id>
    </interactant>
    <interactant intactId="EBI-2432975">
        <id>Q9QUR7</id>
        <label>Pin1</label>
    </interactant>
    <organismsDiffer>false</organismsDiffer>
    <experiments>3</experiments>
</comment>
<comment type="interaction">
    <interactant intactId="EBI-1392707">
        <id>Q01705</id>
    </interactant>
    <interactant intactId="EBI-1392666">
        <id>P31266</id>
        <label>Rbpj</label>
    </interactant>
    <organismsDiffer>false</organismsDiffer>
    <experiments>8</experiments>
</comment>
<comment type="interaction">
    <interactant intactId="EBI-1392707">
        <id>Q01705</id>
    </interactant>
    <interactant intactId="EBI-1210244">
        <id>Q3TKT4</id>
        <label>Smarca4</label>
    </interactant>
    <organismsDiffer>false</organismsDiffer>
    <experiments>2</experiments>
</comment>
<comment type="interaction">
    <interactant intactId="EBI-1392707">
        <id>Q01705</id>
    </interactant>
    <interactant intactId="EBI-7525857">
        <id>Q6P9Z1</id>
        <label>Smarcd3</label>
    </interactant>
    <organismsDiffer>false</organismsDiffer>
    <experiments>2</experiments>
</comment>
<comment type="interaction">
    <interactant intactId="EBI-1392707">
        <id>Q01705</id>
    </interactant>
    <interactant intactId="EBI-413074">
        <id>P62991</id>
        <label>Ubc</label>
    </interactant>
    <organismsDiffer>false</organismsDiffer>
    <experiments>3</experiments>
</comment>
<comment type="interaction">
    <interactant intactId="EBI-1392707">
        <id>Q01705</id>
    </interactant>
    <interactant intactId="EBI-632552">
        <id>Q06330</id>
        <label>RBPJ</label>
    </interactant>
    <organismsDiffer>true</organismsDiffer>
    <experiments>3</experiments>
</comment>
<comment type="interaction">
    <interactant intactId="EBI-1392707">
        <id>Q01705</id>
    </interactant>
    <interactant intactId="EBI-92180">
        <id>P28159</id>
        <label>Su(H)</label>
    </interactant>
    <organismsDiffer>true</organismsDiffer>
    <experiments>3</experiments>
</comment>
<comment type="interaction">
    <interactant intactId="EBI-11292892">
        <id>PRO_0000007679</id>
    </interactant>
    <interactant intactId="EBI-11292862">
        <id>Q77CA8</id>
        <label>LRORF2</label>
    </interactant>
    <organismsDiffer>true</organismsDiffer>
    <experiments>3</experiments>
</comment>
<comment type="subcellular location">
    <subcellularLocation>
        <location evidence="8 25 31">Cell membrane</location>
        <topology evidence="38">Single-pass type I membrane protein</topology>
    </subcellularLocation>
    <subcellularLocation>
        <location evidence="25">Late endosome membrane</location>
        <topology evidence="38">Single-pass type I membrane protein</topology>
    </subcellularLocation>
    <text evidence="25">Nonactivated receptor is targeted for lysosomal degradation via the endosomal pathway; transport from late endosomes to lysosomes requires deuibiquitination by USP12.</text>
</comment>
<comment type="subcellular location">
    <molecule>Notch 1 intracellular domain</molecule>
    <subcellularLocation>
        <location evidence="31">Nucleus</location>
    </subcellularLocation>
    <text evidence="31">Following proteolytical processing NICD is translocated to the nucleus. Nuclear location may require MEGF10.</text>
</comment>
<comment type="alternative products">
    <event type="alternative splicing"/>
    <isoform>
        <id>Q01705-1</id>
        <name>1</name>
        <sequence type="displayed"/>
    </isoform>
    <isoform>
        <id>Q01705-2</id>
        <name>2</name>
        <sequence type="described" ref="VSP_001402 VSP_001403 VSP_001404"/>
    </isoform>
    <isoform>
        <id>Q01705-3</id>
        <name>3</name>
        <sequence type="described" ref="VSP_043064"/>
    </isoform>
    <isoform>
        <id>Q01705-4</id>
        <name>4</name>
        <sequence type="described" ref="VSP_043065"/>
    </isoform>
</comment>
<comment type="tissue specificity">
    <text evidence="18">Highly expressed in the brain, lung and thymus. Expressed at lower levels in the spleen, bone-marrow, spinal cord, eyes, mammary gland, liver, intestine, skeletal muscle, kidney and heart. In the hair follicle, highly expressed exclusively in the epithelial compartment.</text>
</comment>
<comment type="developmental stage">
    <text evidence="14 15 33">First detected in the mesoderm at 7.5 dpc By 8.5 dpc highly expressed in presomitic mesoderm, mesenchyme and endothelial cells, while much lower levels are seen in the neuroepithelium. Between 9.5-10.5 dpc expressed at high levels in the neuroepithelium. At 13.5 dpc expressed in the surface ectoderm, eye and developing whisker follicles. Hair follicle matrix cells expression starts as different cell types become distinguishable in the developing follicle. Expression persists throughout the growth phase of the follicle and maintains the same expression profile in the second hair cycle. The cells in the follicle that undergo a phase of high level expression are in transition from mitotic precursors to several discrete, differentiating cell types. Specifically expressed in cerebellar Bergmann glial cells during postnatal development.</text>
</comment>
<comment type="domain">
    <text evidence="2">Interaction with PSEN1 causes partial unwinding of the transmembrane helix, facilitating access to the scissile peptide bond.</text>
</comment>
<comment type="PTM">
    <text evidence="8 9 11 12">Synthesized in the endoplasmic reticulum as an inactive form which is proteolytically cleaved by a furin-like convertase in the trans-Golgi network before it reaches the plasma membrane to yield an active, ligand-accessible form (PubMed:10882062, PubMed:10882063). Cleavage results in a C-terminal fragment N(TM) and a N-terminal fragment N(EC). Following ligand binding, it is cleaved by ADAM17 to yield a membrane-associated intermediate fragment called notch extracellular truncation (NEXT) (PubMed:10882062, PubMed:10882063). Following endocytosis, this fragment is then cleaved by one of the catalytic subunits of gamma-secretase (PSEN1 or PSEN2) to release a Notch-derived peptide containing the intracellular domain (NICD) from the membrane (PubMed:10882062, PubMed:11459941, PubMed:11518718).</text>
</comment>
<comment type="PTM">
    <text>Phosphorylated.</text>
</comment>
<comment type="PTM">
    <text evidence="2 3 24 30 32">O-linked glycosylation by GALNT11 is involved in determination of left/right symmetry: glycosylation promotes activation of NOTCH1, possibly by promoting cleavage by ADAM17, modulating the balance between motile and immotile (sensory) cilia at the left-right organiser (LRO) (By similarity). O-glycosylated on the EGF-like domains (PubMed:21757702). O-glucosylated at Ser-435 by KDELC1 and KDELC2 (PubMed:30127001). Contains both O-linked fucose and O-linked glucose in the EGF-like domains 11, 12 and 13, which are interacting with the residues on DLL4 (By similarity). O-glycosylation at Ser-1027 is only partial (PubMed:21757702). MFNG-, RFNG- and LFNG-mediated modification of O-fucose residues at specific EGF-like domains results in inhibition of its activation by JAG1 and enhancement of its activation by DLL1 via an increased binding to DLL1 (PubMed:28089369).</text>
</comment>
<comment type="PTM">
    <text evidence="17 22 25 28">Ubiquitinated. Undergoes 'Lys-29'-linked polyubiquitination by ITCH; promotes the lysosomal degradation of non-activated internalized NOTCH1 (PubMed:18628966, PubMed:23886940). Deubiquitination by USP12 is required for transport of internalized non-activated receptor from late endosomes to lysosomes for degradation (PubMed:22778262). Monoubiquitination at Lys-1749 is required for activation by gamma-secretase cleavage, it promotes interaction with AAK1, which stabilizes it. Deubiquitination by EIF3F is necessary for nuclear import of activated Notch (PubMed:15240571).</text>
</comment>
<comment type="PTM">
    <text evidence="19 20">Hydroxylated at Asn-1945 and Asn-2012 by HIF1AN. Hydroxylation reduces affinity for HI1AN and may thus indirectly modulate negative regulation of NICD.</text>
</comment>
<comment type="similarity">
    <text evidence="38">Belongs to the NOTCH family.</text>
</comment>
<sequence>MPRLLTPLLCLTLLPALAARGLRCSQPSGTCLNGGRCEVANGTEACVCSGAFVGQRCQDSNPCLSTPCKNAGTCHVVDHGGTVDYACSCPLGFSGPLCLTPLDNACLANPCRNGGTCDLLTLTEYKCRCPPGWSGKSCQQADPCASNPCANGGQCLPFESSYICRCPPGFHGPTCRQDVNECSQNPGLCRHGGTCHNEIGSYRCACRATHTGPHCELPYVPCSPSPCQNGGTCRPTGDTTHECACLPGFAGQNCEENVDDCPGNNCKNGGACVDGVNTYNCRCPPEWTGQYCTEDVDECQLMPNACQNGGTCHNTHGGYNCVCVNGWTGEDCSENIDDCASAACFQGATCHDRVASFYCECPHGRTGLLCHLNDACISNPCNEGSNCDTNPVNGKAICTCPSGYTGPACSQDVDECALGANPCEHAGKCLNTLGSFECQCLQGYTGPRCEIDVNECISNPCQNDATCLDQIGEFQCICMPGYEGVYCEINTDECASSPCLHNGHCMDKINEFQCQCPKGFNGHLCQYDVDECASTPCKNGAKCLDGPNTYTCVCTEGYTGTHCEVDIDECDPDPCHYGSCKDGVATFTCLCQPGYTGHHCETNINECHSQPCRHGGTCQDRDNSYLCLCLKGTTGPNCEINLDDCASNPCDSGTCLDKIDGYECACEPGYTGSMCNVNIDECAGSPCHNGGTCEDGIAGFTCRCPEGYHDPTCLSEVNECNSNPCIHGACRDGLNGYKCDCAPGWSGTNCDINNNECESNPCVNGGTCKDMTSGYVCTCREGFSGPNCQTNINECASNPCLNQGTCIDDVAGYKCNCPLPYTGATCEVVLAPCATSPCKNSGVCKESEDYESFSCVCPTGWQGQTCEVDINECVKSPCRHGASCQNTNGSYRCLCQAGYTGRNCESDIDDCRPNPCHNGGSCTDGINTAFCDCLPGFQGAFCEEDINECASNPCQNGANCTDCVDSYTCTCPVGFNGIHCENNTPDCTESSCFNGGTCVDGINSFTCLCPPGFTGSYCQYDVNECDSRPCLHGGTCQDSYGTYKCTCPQGYTGLNCQNLVRWCDSAPCKNGGRCWQTNTQYHCECRSGWTGVNCDVLSVSCEVAAQKRGIDVTLLCQHGGLCVDEGDKHYCHCQAGYTGSYCEDEVDECSPNPCQNGATCTDYLGGFSCKCVAGYHGSNCSEEINECLSQPCQNGGTCIDLTNSYKCSCPRGTQGVHCEINVDDCHPPLDPASRSPKCFNNGTCVDQVGGYTCTCPPGFVGERCEGDVNECLSNPCDPRGTQNCVQRVNDFHCECRAGHTGRRCESVINGCRGKPCKNGGVCAVASNTARGFICRCPAGFEGATCENDARTCGSLRCLNGGTCISGPRSPTCLCLGSFTGPECQFPASSPCVGSNPCYNQGTCEPTSENPFYRCLCPAKFNGLLCHILDYSFTGGAGRDIPPPQIEEACELPECQVDAGNKVCNLQCNNHACGWDGGDCSLNFNDPWKNCTQSLQCWKYFSDGHCDSQCNSAGCLFDGFDCQLTEGQCNPLYDQYCKDHFSDGHCDQGCNSAECEWDGLDCAEHVPERLAAGTLVLVVLLPPDQLRNNSFHFLRELSHVLHTNVVFKRDAQGQQMIFPYYGHEEELRKHPIKRSTVGWATSSLLPGTSGGRQRRELDPMDIRGSIVYLEIDNRQCVQSSSQCFQSATDVAAFLGALASLGSLNIPYKIEAVKSEPVEPPLPSQLHLMYVAAAAFVLLFFVGCGVLLSRKRRRQHGQLWFPEGFKVSEASKKKRREPLGEDSVGLKPLKNASDGALMDDNQNEWGDEDLETKKFRFEEPVVLPDLSDQTDHRQWTQQHLDAADLRMSAMAPTPPQGEVDADCMDVNVRGPDGFTPLMIASCSGGGLETGNSEEEEDAPAVISDFIYQGASLHNQTDRTGETALHLAARYSRSDAAKRLLEASADANIQDNMGRTPLHAAVSADAQGVFQILLRNRATDLDARMHDGTTPLILAARLAVEGMLEDLINSHADVNAVDDLGKSALHWAAAVNNVDAAVVLLKNGANKDMQNNKEETPLFLAAREGSYETAKVLLDHFANRDITDHMDRLPRDIAQERMHHDIVRLLDEYNLVRSPQLHGTALGGTPTLSPTLCSPNGYLGNLKSATQGKKARKPSTKGLACGSKEAKDLKARRKKSQDGKGCLLDSSSMLSPVDSLESPHGYLSDVASPPLLPSPFQQSPSMPLSHLPGMPDTHLGISHLNVAAKPEMAALAGGSRLAFEPPPPRLSHLPVASSASTVLSTNGTGAMNFTVGAPASLNGQCEWLPRLQNGMVPSQYNPLRPGVTPGTLSTQAAGLQHSMMGPLHSSLSTNTLSPIIYQGLPNTRLATQPHLVQTQQVQPQNLQLQPQNLQPPSQPHLSVSSAANGHLGRSFLSGEPSQADVQPLGPSSLPVHTILPQESQALPTSLPSSMVPPMTTTQFLTPPSQHSYSSSPVDNTPSHQLQVPEHPFLTPSPESPDQWSSSSPHSNISDWSEGISSPPTTMPSQITHIPEAFK</sequence>
<protein>
    <recommendedName>
        <fullName>Neurogenic locus notch homolog protein 1</fullName>
        <shortName>Notch 1</shortName>
    </recommendedName>
    <alternativeName>
        <fullName evidence="37">Motch A</fullName>
    </alternativeName>
    <alternativeName>
        <fullName>mT14</fullName>
    </alternativeName>
    <alternativeName>
        <fullName>p300</fullName>
    </alternativeName>
    <component>
        <recommendedName>
            <fullName evidence="35">Notch 1 extracellular truncation</fullName>
            <shortName evidence="35">NEXT</shortName>
        </recommendedName>
    </component>
    <component>
        <recommendedName>
            <fullName>Notch 1 intracellular domain</fullName>
            <shortName>NICD</shortName>
        </recommendedName>
    </component>
</protein>
<reference key="1">
    <citation type="journal article" date="1993" name="Genomics">
        <title>Cloning, analysis, and chromosomal localization of Notch-1, a mouse homolog of Drosophila Notch.</title>
        <authorList>
            <person name="Franco del Amo F."/>
            <person name="Gendron-Maguire M."/>
            <person name="Swiatek P.J."/>
            <person name="Jenkins N.A."/>
            <person name="Copeland N.G."/>
            <person name="Gridley T."/>
        </authorList>
    </citation>
    <scope>NUCLEOTIDE SEQUENCE [MRNA] (ISOFORM 1)</scope>
    <source>
        <tissue>Embryo</tissue>
    </source>
</reference>
<reference key="2">
    <citation type="journal article" date="1994" name="Development">
        <title>An activated Notch suppresses neurogenesis and myogenesis but not gliogenesis in mammalian cells.</title>
        <authorList>
            <person name="Nye J.S."/>
            <person name="Kopan R."/>
            <person name="Axel R."/>
        </authorList>
    </citation>
    <scope>NUCLEOTIDE SEQUENCE [MRNA] (ISOFORM 1)</scope>
    <source>
        <strain>BALB/cJ</strain>
        <tissue>Thymus</tissue>
    </source>
</reference>
<reference key="3">
    <citation type="journal article" date="2002" name="Curr. Biol.">
        <title>Glycogen synthase kinase-3beta modulates notch signaling and stability.</title>
        <authorList>
            <person name="Foltz D.R."/>
            <person name="Santiago M.C."/>
            <person name="Berechid B.E."/>
            <person name="Nye J.S."/>
        </authorList>
    </citation>
    <scope>NUCLEOTIDE SEQUENCE [MRNA] (ISOFORM 1)</scope>
    <source>
        <strain>BALB/cJ</strain>
        <tissue>Thymus</tissue>
    </source>
</reference>
<reference key="4">
    <citation type="journal article" date="2003" name="Carcinogenesis">
        <title>Radiation-induced deletions in the 5' end region of Notch1 lead to the formation of truncated proteins and are involved in the development of mouse thymic lymphomas.</title>
        <authorList>
            <person name="Tsuji H."/>
            <person name="Ishii-Ohba H."/>
            <person name="Ukai H."/>
            <person name="Katsube T."/>
            <person name="Ogiu T."/>
        </authorList>
    </citation>
    <scope>NUCLEOTIDE SEQUENCE [GENOMIC DNA]</scope>
    <source>
        <strain>CB-17/SCID</strain>
        <tissue>Thymus</tissue>
    </source>
</reference>
<reference key="5">
    <citation type="journal article" date="2009" name="PLoS Biol.">
        <title>Lineage-specific biology revealed by a finished genome assembly of the mouse.</title>
        <authorList>
            <person name="Church D.M."/>
            <person name="Goodstadt L."/>
            <person name="Hillier L.W."/>
            <person name="Zody M.C."/>
            <person name="Goldstein S."/>
            <person name="She X."/>
            <person name="Bult C.J."/>
            <person name="Agarwala R."/>
            <person name="Cherry J.L."/>
            <person name="DiCuccio M."/>
            <person name="Hlavina W."/>
            <person name="Kapustin Y."/>
            <person name="Meric P."/>
            <person name="Maglott D."/>
            <person name="Birtle Z."/>
            <person name="Marques A.C."/>
            <person name="Graves T."/>
            <person name="Zhou S."/>
            <person name="Teague B."/>
            <person name="Potamousis K."/>
            <person name="Churas C."/>
            <person name="Place M."/>
            <person name="Herschleb J."/>
            <person name="Runnheim R."/>
            <person name="Forrest D."/>
            <person name="Amos-Landgraf J."/>
            <person name="Schwartz D.C."/>
            <person name="Cheng Z."/>
            <person name="Lindblad-Toh K."/>
            <person name="Eichler E.E."/>
            <person name="Ponting C.P."/>
        </authorList>
    </citation>
    <scope>NUCLEOTIDE SEQUENCE [LARGE SCALE GENOMIC DNA]</scope>
    <source>
        <strain>C57BL/6J</strain>
    </source>
</reference>
<reference key="6">
    <citation type="submission" date="2005-07" db="EMBL/GenBank/DDBJ databases">
        <authorList>
            <person name="Mural R.J."/>
            <person name="Adams M.D."/>
            <person name="Myers E.W."/>
            <person name="Smith H.O."/>
            <person name="Venter J.C."/>
        </authorList>
    </citation>
    <scope>NUCLEOTIDE SEQUENCE [LARGE SCALE GENOMIC DNA]</scope>
</reference>
<reference key="7">
    <citation type="journal article" date="2004" name="Genome Res.">
        <title>The status, quality, and expansion of the NIH full-length cDNA project: the Mammalian Gene Collection (MGC).</title>
        <authorList>
            <consortium name="The MGC Project Team"/>
        </authorList>
    </citation>
    <scope>NUCLEOTIDE SEQUENCE [LARGE SCALE MRNA] (ISOFORM 1)</scope>
    <source>
        <tissue>Brain</tissue>
    </source>
</reference>
<reference key="8">
    <citation type="journal article" date="1992" name="Dev. Biol.">
        <title>Expression analysis of a Notch homologue in the mouse embryo.</title>
        <authorList>
            <person name="Reaume A.G."/>
            <person name="Conlon R.A."/>
            <person name="Zirngibl R."/>
            <person name="Yamaguchi T.P."/>
            <person name="Rossant J."/>
        </authorList>
    </citation>
    <scope>NUCLEOTIDE SEQUENCE [MRNA] OF 731-1899 (ISOFORM 2)</scope>
    <scope>DEVELOPMENTAL STAGE</scope>
    <source>
        <strain>CD-1</strain>
        <tissue>Embryo</tissue>
    </source>
</reference>
<reference key="9">
    <citation type="journal article" date="1993" name="Exp. Cell Res.">
        <title>Motch A and Motch B-two mouse Notch homologues coexpressed in a wide variety of tissues.</title>
        <authorList>
            <person name="Lardelli M."/>
            <person name="Lendahl U."/>
        </authorList>
    </citation>
    <scope>NUCLEOTIDE SEQUENCE [MRNA] OF 1161-1547</scope>
    <source>
        <strain>C57BL/6 X CBA</strain>
        <tissue>Embryo</tissue>
    </source>
</reference>
<reference key="10">
    <citation type="journal article" date="2005" name="Science">
        <title>The transcriptional landscape of the mammalian genome.</title>
        <authorList>
            <person name="Carninci P."/>
            <person name="Kasukawa T."/>
            <person name="Katayama S."/>
            <person name="Gough J."/>
            <person name="Frith M.C."/>
            <person name="Maeda N."/>
            <person name="Oyama R."/>
            <person name="Ravasi T."/>
            <person name="Lenhard B."/>
            <person name="Wells C."/>
            <person name="Kodzius R."/>
            <person name="Shimokawa K."/>
            <person name="Bajic V.B."/>
            <person name="Brenner S.E."/>
            <person name="Batalov S."/>
            <person name="Forrest A.R."/>
            <person name="Zavolan M."/>
            <person name="Davis M.J."/>
            <person name="Wilming L.G."/>
            <person name="Aidinis V."/>
            <person name="Allen J.E."/>
            <person name="Ambesi-Impiombato A."/>
            <person name="Apweiler R."/>
            <person name="Aturaliya R.N."/>
            <person name="Bailey T.L."/>
            <person name="Bansal M."/>
            <person name="Baxter L."/>
            <person name="Beisel K.W."/>
            <person name="Bersano T."/>
            <person name="Bono H."/>
            <person name="Chalk A.M."/>
            <person name="Chiu K.P."/>
            <person name="Choudhary V."/>
            <person name="Christoffels A."/>
            <person name="Clutterbuck D.R."/>
            <person name="Crowe M.L."/>
            <person name="Dalla E."/>
            <person name="Dalrymple B.P."/>
            <person name="de Bono B."/>
            <person name="Della Gatta G."/>
            <person name="di Bernardo D."/>
            <person name="Down T."/>
            <person name="Engstrom P."/>
            <person name="Fagiolini M."/>
            <person name="Faulkner G."/>
            <person name="Fletcher C.F."/>
            <person name="Fukushima T."/>
            <person name="Furuno M."/>
            <person name="Futaki S."/>
            <person name="Gariboldi M."/>
            <person name="Georgii-Hemming P."/>
            <person name="Gingeras T.R."/>
            <person name="Gojobori T."/>
            <person name="Green R.E."/>
            <person name="Gustincich S."/>
            <person name="Harbers M."/>
            <person name="Hayashi Y."/>
            <person name="Hensch T.K."/>
            <person name="Hirokawa N."/>
            <person name="Hill D."/>
            <person name="Huminiecki L."/>
            <person name="Iacono M."/>
            <person name="Ikeo K."/>
            <person name="Iwama A."/>
            <person name="Ishikawa T."/>
            <person name="Jakt M."/>
            <person name="Kanapin A."/>
            <person name="Katoh M."/>
            <person name="Kawasawa Y."/>
            <person name="Kelso J."/>
            <person name="Kitamura H."/>
            <person name="Kitano H."/>
            <person name="Kollias G."/>
            <person name="Krishnan S.P."/>
            <person name="Kruger A."/>
            <person name="Kummerfeld S.K."/>
            <person name="Kurochkin I.V."/>
            <person name="Lareau L.F."/>
            <person name="Lazarevic D."/>
            <person name="Lipovich L."/>
            <person name="Liu J."/>
            <person name="Liuni S."/>
            <person name="McWilliam S."/>
            <person name="Madan Babu M."/>
            <person name="Madera M."/>
            <person name="Marchionni L."/>
            <person name="Matsuda H."/>
            <person name="Matsuzawa S."/>
            <person name="Miki H."/>
            <person name="Mignone F."/>
            <person name="Miyake S."/>
            <person name="Morris K."/>
            <person name="Mottagui-Tabar S."/>
            <person name="Mulder N."/>
            <person name="Nakano N."/>
            <person name="Nakauchi H."/>
            <person name="Ng P."/>
            <person name="Nilsson R."/>
            <person name="Nishiguchi S."/>
            <person name="Nishikawa S."/>
            <person name="Nori F."/>
            <person name="Ohara O."/>
            <person name="Okazaki Y."/>
            <person name="Orlando V."/>
            <person name="Pang K.C."/>
            <person name="Pavan W.J."/>
            <person name="Pavesi G."/>
            <person name="Pesole G."/>
            <person name="Petrovsky N."/>
            <person name="Piazza S."/>
            <person name="Reed J."/>
            <person name="Reid J.F."/>
            <person name="Ring B.Z."/>
            <person name="Ringwald M."/>
            <person name="Rost B."/>
            <person name="Ruan Y."/>
            <person name="Salzberg S.L."/>
            <person name="Sandelin A."/>
            <person name="Schneider C."/>
            <person name="Schoenbach C."/>
            <person name="Sekiguchi K."/>
            <person name="Semple C.A."/>
            <person name="Seno S."/>
            <person name="Sessa L."/>
            <person name="Sheng Y."/>
            <person name="Shibata Y."/>
            <person name="Shimada H."/>
            <person name="Shimada K."/>
            <person name="Silva D."/>
            <person name="Sinclair B."/>
            <person name="Sperling S."/>
            <person name="Stupka E."/>
            <person name="Sugiura K."/>
            <person name="Sultana R."/>
            <person name="Takenaka Y."/>
            <person name="Taki K."/>
            <person name="Tammoja K."/>
            <person name="Tan S.L."/>
            <person name="Tang S."/>
            <person name="Taylor M.S."/>
            <person name="Tegner J."/>
            <person name="Teichmann S.A."/>
            <person name="Ueda H.R."/>
            <person name="van Nimwegen E."/>
            <person name="Verardo R."/>
            <person name="Wei C.L."/>
            <person name="Yagi K."/>
            <person name="Yamanishi H."/>
            <person name="Zabarovsky E."/>
            <person name="Zhu S."/>
            <person name="Zimmer A."/>
            <person name="Hide W."/>
            <person name="Bult C."/>
            <person name="Grimmond S.M."/>
            <person name="Teasdale R.D."/>
            <person name="Liu E.T."/>
            <person name="Brusic V."/>
            <person name="Quackenbush J."/>
            <person name="Wahlestedt C."/>
            <person name="Mattick J.S."/>
            <person name="Hume D.A."/>
            <person name="Kai C."/>
            <person name="Sasaki D."/>
            <person name="Tomaru Y."/>
            <person name="Fukuda S."/>
            <person name="Kanamori-Katayama M."/>
            <person name="Suzuki M."/>
            <person name="Aoki J."/>
            <person name="Arakawa T."/>
            <person name="Iida J."/>
            <person name="Imamura K."/>
            <person name="Itoh M."/>
            <person name="Kato T."/>
            <person name="Kawaji H."/>
            <person name="Kawagashira N."/>
            <person name="Kawashima T."/>
            <person name="Kojima M."/>
            <person name="Kondo S."/>
            <person name="Konno H."/>
            <person name="Nakano K."/>
            <person name="Ninomiya N."/>
            <person name="Nishio T."/>
            <person name="Okada M."/>
            <person name="Plessy C."/>
            <person name="Shibata K."/>
            <person name="Shiraki T."/>
            <person name="Suzuki S."/>
            <person name="Tagami M."/>
            <person name="Waki K."/>
            <person name="Watahiki A."/>
            <person name="Okamura-Oho Y."/>
            <person name="Suzuki H."/>
            <person name="Kawai J."/>
            <person name="Hayashizaki Y."/>
        </authorList>
    </citation>
    <scope>NUCLEOTIDE SEQUENCE [LARGE SCALE MRNA] OF 1373-2531</scope>
    <source>
        <strain>NOD</strain>
    </source>
</reference>
<reference key="11">
    <citation type="journal article" date="1992" name="Development">
        <title>Expression pattern of Motch, a mouse homolog of Drosophila Notch, suggests an important role in early postimplantation mouse development.</title>
        <authorList>
            <person name="Franco del Amo F."/>
            <person name="Smith D.E."/>
            <person name="Swiatek P.J."/>
            <person name="Gendron-Maguire M."/>
            <person name="Greenspan R.J."/>
            <person name="McMahon A.P."/>
            <person name="Gridley T."/>
        </authorList>
    </citation>
    <scope>NUCLEOTIDE SEQUENCE [MRNA] OF 1551-1647 (ISOFORM 1)</scope>
    <scope>DEVELOPMENTAL STAGE</scope>
    <source>
        <tissue>Embryo</tissue>
    </source>
</reference>
<reference key="12">
    <citation type="journal article" date="1998" name="Proc. Natl. Acad. Sci. U.S.A.">
        <title>The Notch1 receptor is cleaved constitutively by a furin-like convertase.</title>
        <authorList>
            <person name="Logeat F."/>
            <person name="Bessia C."/>
            <person name="Brou C."/>
            <person name="LeBail O."/>
            <person name="Jarriault S."/>
            <person name="Seidah N.G."/>
            <person name="Israel A."/>
        </authorList>
    </citation>
    <scope>PROTEIN SEQUENCE OF 1655-1659</scope>
    <scope>CLEAVAGE BY FURIN-LIKE CONVERTASE</scope>
    <scope>MUTAGENESIS OF 1651-ARG--ARG-1654</scope>
</reference>
<reference key="13">
    <citation type="journal article" date="1999" name="FEBS Lett.">
        <title>Murine leukemia provirus-mediated activation of the Notch1 gene leads to induction of HES-1 in a mouse T lymphoma cell line, DL-3.</title>
        <authorList>
            <person name="Lee J.S."/>
            <person name="Ishimoto A."/>
            <person name="Yanagawa S."/>
        </authorList>
    </citation>
    <scope>NUCLEOTIDE SEQUENCE [MRNA] OF 1659-1673</scope>
</reference>
<reference key="14">
    <citation type="journal article" date="1993" name="J. Cell Biol.">
        <title>Mouse notch: expression in hair follicles correlates with cell fate determination.</title>
        <authorList>
            <person name="Kopan R."/>
            <person name="Weintraub H."/>
        </authorList>
    </citation>
    <scope>NUCLEOTIDE SEQUENCE [MRNA] OF 1865-2076</scope>
    <scope>DEVELOPMENTAL STAGE IN HAIR FOLLICLES</scope>
</reference>
<reference key="15">
    <citation type="journal article" date="2008" name="Proc. Natl. Acad. Sci. U.S.A.">
        <title>Interaction with factor inhibiting HIF-1 defines an additional mode of cross-coupling between the Notch and hypoxia signaling pathways.</title>
        <authorList>
            <person name="Zheng X."/>
            <person name="Linke S."/>
            <person name="Dias J.M."/>
            <person name="Zheng X."/>
            <person name="Gradin K."/>
            <person name="Wallis T.P."/>
            <person name="Hamilton B.R."/>
            <person name="Gustafsson M."/>
            <person name="Ruas J.L."/>
            <person name="Wilkins S."/>
            <person name="Bilton R.L."/>
            <person name="Brismar K."/>
            <person name="Whitelaw M.L."/>
            <person name="Pereira T."/>
            <person name="Gorman J.J."/>
            <person name="Ericson J."/>
            <person name="Peet D.J."/>
            <person name="Lendahl U."/>
            <person name="Poellinger L."/>
        </authorList>
    </citation>
    <scope>PROTEIN SEQUENCE OF 1937-1952 AND 1995-2019</scope>
    <scope>FUNCTION</scope>
    <scope>INTERACTION WITH HIF1AN</scope>
    <scope>HYDROXYLATION AT ASN-1945 AND ASN-2012 BY HIF1AN</scope>
    <scope>MUTAGENESIS OF ASN-1945 AND ASN-2012</scope>
    <scope>IDENTIFICATION BY MASS SPECTROMETRY</scope>
</reference>
<reference key="16">
    <citation type="journal article" date="1995" name="Cytokines Cell. Mol. Ther.">
        <title>Dynamic changes in gene expression during in vitro differentiation of mouse embryonic stem cells.</title>
        <authorList>
            <person name="Messerle M."/>
            <person name="Follo M."/>
            <person name="Nehls M."/>
            <person name="Eggert H."/>
            <person name="Boehm T."/>
        </authorList>
    </citation>
    <scope>NUCLEOTIDE SEQUENCE [MRNA] OF 1951-2201</scope>
</reference>
<reference key="17">
    <citation type="journal article" date="2000" name="Mol. Cell">
        <title>A ligand-induced extracellular cleavage regulates gamma-secretase-like proteolytic activation of Notch1.</title>
        <authorList>
            <person name="Mumm J.S."/>
            <person name="Schroeter E.H."/>
            <person name="Saxena M.T."/>
            <person name="Griesemer A."/>
            <person name="Tian X."/>
            <person name="Pan D.J."/>
            <person name="Ray W.J."/>
            <person name="Kopan R."/>
        </authorList>
    </citation>
    <scope>SUBCELLULAR LOCATION</scope>
    <scope>PROTEOLYTIC PROCESSING</scope>
    <scope>MUTAGENESIS OF CYS-1675 AND CYS-1682</scope>
</reference>
<reference key="18">
    <citation type="journal article" date="2000" name="Mol. Cell">
        <title>A novel proteolytic cleavage involved in Notch signaling: the role of the disintegrin-metalloprotease TACE.</title>
        <authorList>
            <person name="Brou C."/>
            <person name="Logeat F."/>
            <person name="Gupta N."/>
            <person name="Bessia C."/>
            <person name="LeBail O."/>
            <person name="Doedens J.R."/>
            <person name="Cumano A."/>
            <person name="Roux P."/>
            <person name="Black R.A."/>
            <person name="Israel A."/>
        </authorList>
    </citation>
    <scope>PROTEOLYTIC PROCESSING</scope>
</reference>
<reference key="19">
    <citation type="journal article" date="2001" name="J. Biol. Chem.">
        <title>Murine notch homologs (N1-4) undergo presenilin-dependent proteolysis.</title>
        <authorList>
            <person name="Saxena M.T."/>
            <person name="Schroeter E.H."/>
            <person name="Mumm J.S."/>
            <person name="Kopan R."/>
        </authorList>
    </citation>
    <scope>PARTIAL PROTEIN SEQUENCE</scope>
    <scope>PROTEOLYTIC PROCESSING</scope>
</reference>
<reference key="20">
    <citation type="journal article" date="2001" name="Proc. Natl. Acad. Sci. U.S.A.">
        <title>Conservation of the biochemical mechanisms of signal transduction among mammalian Notch family members.</title>
        <authorList>
            <person name="Mizutani T."/>
            <person name="Taniguchi Y."/>
            <person name="Aoki T."/>
            <person name="Hashimoto N."/>
            <person name="Honjo T."/>
        </authorList>
    </citation>
    <scope>PROTEOLYTIC PROCESSING</scope>
</reference>
<reference key="21">
    <citation type="journal article" date="2001" name="Int. J. Dev. Neurosci.">
        <title>Murine homologs of deltex define a novel gene family involved in vertebrate Notch signaling and neurogenesis.</title>
        <authorList>
            <person name="Kishi N."/>
            <person name="Tang Z."/>
            <person name="Maeda Y."/>
            <person name="Hirai A."/>
            <person name="Mo R."/>
            <person name="Ito M."/>
            <person name="Suzuki S."/>
            <person name="Nakao K."/>
            <person name="Kinoshita T."/>
            <person name="Kadesch T."/>
            <person name="Hui C.-C."/>
            <person name="Artavanis-Tsakonas S."/>
            <person name="Okano H."/>
            <person name="Matsuno K."/>
        </authorList>
    </citation>
    <scope>INTERACTION WITH DTX1 AND DTX2</scope>
</reference>
<reference key="22">
    <citation type="journal article" date="2002" name="J. Biol. Chem.">
        <title>The nephroblastoma overexpressed gene (NOV/ccn3) protein associates with Notch1 extracellular domain and inhibits myoblast differentiation via Notch signaling pathway.</title>
        <authorList>
            <person name="Sakamoto K."/>
            <person name="Yamaguchi S."/>
            <person name="Ando R."/>
            <person name="Miyawaki A."/>
            <person name="Kabasawa Y."/>
            <person name="Takagi M."/>
            <person name="Li C.L."/>
            <person name="Perbal B."/>
            <person name="Katsube K."/>
        </authorList>
    </citation>
    <scope>INTERACTION WITH CCN3</scope>
</reference>
<reference key="23">
    <citation type="journal article" date="2004" name="Gene">
        <title>Cloning and functional characterization of the murine mastermind-like 1 (Maml1) gene.</title>
        <authorList>
            <person name="Wu L."/>
            <person name="Kobayashi K."/>
            <person name="Sun T."/>
            <person name="Gao P."/>
            <person name="Liu J."/>
            <person name="Nakamura M."/>
            <person name="Weisberg E."/>
            <person name="Mukhopadhyay N.K."/>
            <person name="Griffin J.D."/>
        </authorList>
    </citation>
    <scope>INTERACTION WITH MAML1</scope>
</reference>
<reference key="24">
    <citation type="journal article" date="2004" name="J. Cell Biol.">
        <title>Monoubiquitination and endocytosis direct gamma-secretase cleavage of activated Notch receptor.</title>
        <authorList>
            <person name="Gupta-Rossi N."/>
            <person name="Six E."/>
            <person name="LeBail O."/>
            <person name="Logeat F."/>
            <person name="Chastagner P."/>
            <person name="Olry A."/>
            <person name="Israel A."/>
            <person name="Brou C."/>
        </authorList>
    </citation>
    <scope>UBIQUITINATION AT LYS-1749</scope>
    <scope>ENDOCYTOSIS</scope>
</reference>
<reference key="25">
    <citation type="journal article" date="2005" name="Nat. Neurosci.">
        <title>DNER acts as a neuron-specific Notch ligand during Bergmann glial development.</title>
        <authorList>
            <person name="Eiraku M."/>
            <person name="Tohgo A."/>
            <person name="Ono K."/>
            <person name="Kaneko M."/>
            <person name="Fujishima K."/>
            <person name="Hirano T."/>
            <person name="Kengaku M."/>
        </authorList>
    </citation>
    <scope>INTERACTION WITH DNER</scope>
    <scope>FUNCTION</scope>
    <scope>TISSUE SPECIFICITY</scope>
</reference>
<reference key="26">
    <citation type="journal article" date="2008" name="J. Cell Sci.">
        <title>Zfp64 participates in Notch signaling and regulates differentiation in mesenchymal cells.</title>
        <authorList>
            <person name="Sakamoto K."/>
            <person name="Tamamura Y."/>
            <person name="Katsube K."/>
            <person name="Yamaguchi A."/>
        </authorList>
    </citation>
    <scope>INTERACTION WITH ZFP64</scope>
</reference>
<reference key="27">
    <citation type="journal article" date="2008" name="PLoS ONE">
        <title>AIP4/Itch regulates Notch receptor degradation in the absence of ligand.</title>
        <authorList>
            <person name="Chastagner P."/>
            <person name="Israel A."/>
            <person name="Brou C."/>
        </authorList>
    </citation>
    <scope>UBIQUITINATION BY ITCH</scope>
</reference>
<reference key="28">
    <citation type="journal article" date="2010" name="Cell">
        <title>A tissue-specific atlas of mouse protein phosphorylation and expression.</title>
        <authorList>
            <person name="Huttlin E.L."/>
            <person name="Jedrychowski M.P."/>
            <person name="Elias J.E."/>
            <person name="Goswami T."/>
            <person name="Rad R."/>
            <person name="Beausoleil S.A."/>
            <person name="Villen J."/>
            <person name="Haas W."/>
            <person name="Sowa M.E."/>
            <person name="Gygi S.P."/>
        </authorList>
    </citation>
    <scope>PHOSPHORYLATION [LARGE SCALE ANALYSIS] AT THR-1851</scope>
    <scope>IDENTIFICATION BY MASS SPECTROMETRY [LARGE SCALE ANALYSIS]</scope>
    <source>
        <tissue>Pancreas</tissue>
    </source>
</reference>
<reference key="29">
    <citation type="journal article" date="2011" name="J. Biol. Chem.">
        <title>The adaptor-associated kinase 1, AAK1, is a positive regulator of the Notch pathway.</title>
        <authorList>
            <person name="Gupta-Rossi N."/>
            <person name="Ortica S."/>
            <person name="Meas-Yedid V."/>
            <person name="Heuss S."/>
            <person name="Moretti J."/>
            <person name="Olivo-Marin J.C."/>
            <person name="Israel A."/>
        </authorList>
    </citation>
    <scope>INTERACTION WITH AAK1</scope>
</reference>
<reference key="30">
    <citation type="journal article" date="2011" name="J. Biol. Chem.">
        <title>O-glucose trisaccharide is present at high but variable stoichiometry at multiple sites on mouse Notch1.</title>
        <authorList>
            <person name="Rana N.A."/>
            <person name="Nita-Lazar A."/>
            <person name="Takeuchi H."/>
            <person name="Kakuda S."/>
            <person name="Luther K.B."/>
            <person name="Haltiwanger R.S."/>
        </authorList>
    </citation>
    <scope>GLYCOSYLATION AT SER-65; THR-73; THR-116; SER-146; THR-194; SER-341; SER-378; SER-458; THR-466; SER-496; SER-534; SER-609; SER-647; SER-722; SER-759; THR-767; SER-797; THR-805; SER-951; SER-1027; THR-1035; SER-1065; SER-1189; THR-1197; SER-1273 AND THR-1362</scope>
    <scope>MUTAGENESIS OF SER-65; SER-146; SER-341; SER-378; SER-458; SER-496; SER-534; SER-609; SER-647; SER-722; SER-759; SER-797; SER-951; SER-1027; SER-1065; SER-1189 AND SER-1273</scope>
</reference>
<reference key="31">
    <citation type="journal article" date="2012" name="J. Biol. Chem.">
        <title>The ubiquitin-specific protease 12 (USP12) is a negative regulator of notch signaling acting on notch receptor trafficking toward degradation.</title>
        <authorList>
            <person name="Moretti J."/>
            <person name="Chastagner P."/>
            <person name="Liang C.C."/>
            <person name="Cohn M.A."/>
            <person name="Israel A."/>
            <person name="Brou C."/>
        </authorList>
    </citation>
    <scope>SUBCELLULAR LOCATION</scope>
    <scope>DEUBIQUITINATION BY USP12</scope>
</reference>
<reference key="32">
    <citation type="journal article" date="2012" name="Nat. Neurosci.">
        <title>BCL6 controls neurogenesis through Sirt1-dependent epigenetic repression of selective Notch targets.</title>
        <authorList>
            <person name="Tiberi L."/>
            <person name="van den Ameele J."/>
            <person name="Dimidschstein J."/>
            <person name="Piccirilli J."/>
            <person name="Gall D."/>
            <person name="Herpoel A."/>
            <person name="Bilheu A."/>
            <person name="Bonnefont J."/>
            <person name="Iacovino M."/>
            <person name="Kyba M."/>
            <person name="Bouschet T."/>
            <person name="Vanderhaeghen P."/>
        </authorList>
    </citation>
    <scope>FUNCTION AS NEUROGENESIS REPRESSOR</scope>
    <scope>INTERACTION WITH BCL6</scope>
</reference>
<reference key="33">
    <citation type="journal article" date="2013" name="J. Cell Sci.">
        <title>Alpha-arrestin 1 (ARRDC1) and beta-arrestins cooperate to mediate Notch degradation in mammals.</title>
        <authorList>
            <person name="Puca L."/>
            <person name="Chastagner P."/>
            <person name="Meas-Yedid V."/>
            <person name="Israel A."/>
            <person name="Brou C."/>
        </authorList>
    </citation>
    <scope>UBIQUITINATION BY ITCH</scope>
</reference>
<reference key="34">
    <citation type="journal article" date="2013" name="Nature">
        <title>Protective astrogenesis from the SVZ niche after injury is controlled by Notch modulator Thbs4.</title>
        <authorList>
            <person name="Benner E.J."/>
            <person name="Luciano D."/>
            <person name="Jo R."/>
            <person name="Abdi K."/>
            <person name="Paez-Gonzalez P."/>
            <person name="Sheng H."/>
            <person name="Warner D.S."/>
            <person name="Liu C."/>
            <person name="Eroglu C."/>
            <person name="Kuo C.T."/>
        </authorList>
    </citation>
    <scope>FUNCTION</scope>
    <scope>INTERACTION WITH THBS4</scope>
</reference>
<reference key="35">
    <citation type="journal article" date="2014" name="Cancer Res.">
        <title>NACK is an integral component of the Notch transcriptional activation complex and is critical for development and tumorigenesis.</title>
        <authorList>
            <person name="Weaver K.L."/>
            <person name="Alves-Guerra M.C."/>
            <person name="Jin K."/>
            <person name="Wang Z."/>
            <person name="Han X."/>
            <person name="Ranganathan P."/>
            <person name="Zhu X."/>
            <person name="DaSilva T."/>
            <person name="Liu W."/>
            <person name="Ratti F."/>
            <person name="Demarest R.M."/>
            <person name="Tzimas C."/>
            <person name="Rice M."/>
            <person name="Vasquez-Del Carpio R."/>
            <person name="Dahmane N."/>
            <person name="Robbins D.J."/>
            <person name="Capobianco A.J."/>
        </authorList>
    </citation>
    <scope>INTERACTION WITH PRAG1</scope>
    <scope>INTERACTION WITH PRAG1 AND MAML1</scope>
</reference>
<reference key="36">
    <citation type="journal article" date="2017" name="Dev. Cell">
        <title>Deciphering the fringe-mediated notch code: identification of activating and inhibiting sites allowing discrimination between ligands.</title>
        <authorList>
            <person name="Kakuda S."/>
            <person name="Haltiwanger R.S."/>
        </authorList>
    </citation>
    <scope>GLYCOSYLATION AT THR-73; THR-116; THR-194; THR-232; THR-311; THR-349; SER-458; THR-466; THR-617; THR-692; SER-759; THR-767; SER-784; SER-797; THR-805; THR-900; SER-921; THR-997; THR-1035; THR-1159; THR-1197; THR-1362; THR-1379 AND THR-1402</scope>
    <scope>MUTAGENESIS OF THR-232; THR-311; THR-349; THR-466; THR-997; THR-1035; THR-1159; THR-1362 AND THR-1402</scope>
    <scope>INTERACTION WITH DLL1 AND JAG1</scope>
</reference>
<reference key="37">
    <citation type="journal article" date="2017" name="Hum. Mol. Genet.">
        <title>Consequences of MEGF10 deficiency on myoblast function and Notch1 interactions.</title>
        <authorList>
            <person name="Saha M."/>
            <person name="Mitsuhashi S."/>
            <person name="Jones M.D."/>
            <person name="Manko K."/>
            <person name="Reddy H.M."/>
            <person name="Bruels C."/>
            <person name="Cho K.A."/>
            <person name="Pacak C.A."/>
            <person name="Draper I."/>
            <person name="Kang P.B."/>
        </authorList>
    </citation>
    <scope>SUBCELLULAR LOCATION</scope>
    <scope>INTERACTION WITH MEGF10</scope>
</reference>
<reference key="38">
    <citation type="journal article" date="2018" name="Proc. Natl. Acad. Sci. U.S.A.">
        <title>Two novel protein O-glucosyltransferases that modify sites distinct from POGLUT1 and affect Notch trafficking and signaling.</title>
        <authorList>
            <person name="Takeuchi H."/>
            <person name="Schneider M."/>
            <person name="Williamson D.B."/>
            <person name="Ito A."/>
            <person name="Takeuchi M."/>
            <person name="Handford P.A."/>
            <person name="Haltiwanger R.S."/>
        </authorList>
    </citation>
    <scope>GLYCOSYLATION AT SER-435</scope>
    <scope>MUTAGENESIS OF THR-311 AND SER-435</scope>
</reference>
<reference key="39">
    <citation type="journal article" date="2005" name="Protein Sci.">
        <title>The crystal structure of a partial mouse Notch-1 ankyrin domain: repeats 4 through 7 preserve an ankyrin fold.</title>
        <authorList>
            <person name="Lubman O.Y."/>
            <person name="Kopan R."/>
            <person name="Waksman G."/>
            <person name="Korolev S."/>
        </authorList>
    </citation>
    <scope>X-RAY CRYSTALLOGRAPHY (2.2 ANGSTROMS) OF 1971-2104</scope>
</reference>
<reference key="40">
    <citation type="journal article" date="2007" name="J. Biol. Chem.">
        <title>Asparaginyl hydroxylation of the Notch ankyrin repeat domain by factor inhibiting hypoxia-inducible factor.</title>
        <authorList>
            <person name="Coleman M.L."/>
            <person name="McDonough M.A."/>
            <person name="Hewitson K.S."/>
            <person name="Coles C."/>
            <person name="Mecinovic J."/>
            <person name="Edelmann M."/>
            <person name="Cook K.M."/>
            <person name="Cockman M.E."/>
            <person name="Lancaster D.E."/>
            <person name="Kessler B.M."/>
            <person name="Oldham N.J."/>
            <person name="Ratcliffe P.J."/>
            <person name="Schofield C.J."/>
        </authorList>
    </citation>
    <scope>X-RAY CRYSTALLOGRAPHY (2.35 ANGSTROMS) OF 1899-2106 IN COMPLEX WITH HIF1AN; IRON AND 2-OXOGLUTARATE</scope>
    <scope>HYDROXYLATION AT ASN-1945 AND ASN-2012</scope>
    <scope>MUTAGENESIS OF ASN-1945 AND ASN-2012</scope>
    <scope>IDENTIFICATION BY MASS SPECTROMETRY</scope>
</reference>
<organism evidence="43">
    <name type="scientific">Mus musculus</name>
    <name type="common">Mouse</name>
    <dbReference type="NCBI Taxonomy" id="10090"/>
    <lineage>
        <taxon>Eukaryota</taxon>
        <taxon>Metazoa</taxon>
        <taxon>Chordata</taxon>
        <taxon>Craniata</taxon>
        <taxon>Vertebrata</taxon>
        <taxon>Euteleostomi</taxon>
        <taxon>Mammalia</taxon>
        <taxon>Eutheria</taxon>
        <taxon>Euarchontoglires</taxon>
        <taxon>Glires</taxon>
        <taxon>Rodentia</taxon>
        <taxon>Myomorpha</taxon>
        <taxon>Muroidea</taxon>
        <taxon>Muridae</taxon>
        <taxon>Murinae</taxon>
        <taxon>Mus</taxon>
        <taxon>Mus</taxon>
    </lineage>
</organism>
<dbReference type="EMBL" id="Z11886">
    <property type="protein sequence ID" value="CAA77941.1"/>
    <property type="molecule type" value="mRNA"/>
</dbReference>
<dbReference type="EMBL" id="AF508809">
    <property type="protein sequence ID" value="AAM28905.1"/>
    <property type="molecule type" value="mRNA"/>
</dbReference>
<dbReference type="EMBL" id="AB100603">
    <property type="protein sequence ID" value="BAC77038.1"/>
    <property type="molecule type" value="Genomic_DNA"/>
</dbReference>
<dbReference type="EMBL" id="AB100603">
    <property type="protein sequence ID" value="BAC77039.1"/>
    <property type="molecule type" value="Genomic_DNA"/>
</dbReference>
<dbReference type="EMBL" id="AB100603">
    <property type="protein sequence ID" value="BAC77040.1"/>
    <property type="molecule type" value="Genomic_DNA"/>
</dbReference>
<dbReference type="EMBL" id="AL732541">
    <property type="status" value="NOT_ANNOTATED_CDS"/>
    <property type="molecule type" value="Genomic_DNA"/>
</dbReference>
<dbReference type="EMBL" id="CH466542">
    <property type="protein sequence ID" value="EDL08321.1"/>
    <property type="molecule type" value="Genomic_DNA"/>
</dbReference>
<dbReference type="EMBL" id="BC138441">
    <property type="protein sequence ID" value="AAI38442.1"/>
    <property type="molecule type" value="mRNA"/>
</dbReference>
<dbReference type="EMBL" id="BC138442">
    <property type="protein sequence ID" value="AAI38443.1"/>
    <property type="molecule type" value="mRNA"/>
</dbReference>
<dbReference type="EMBL" id="L02613">
    <property type="protein sequence ID" value="AAK14898.1"/>
    <property type="molecule type" value="mRNA"/>
</dbReference>
<dbReference type="EMBL" id="X68278">
    <property type="protein sequence ID" value="CAA48339.1"/>
    <property type="molecule type" value="mRNA"/>
</dbReference>
<dbReference type="EMBL" id="AK154528">
    <property type="protein sequence ID" value="BAE32653.1"/>
    <property type="molecule type" value="mRNA"/>
</dbReference>
<dbReference type="EMBL" id="AK157475">
    <property type="protein sequence ID" value="BAE34095.1"/>
    <property type="molecule type" value="mRNA"/>
</dbReference>
<dbReference type="EMBL" id="AJ238029">
    <property type="protein sequence ID" value="CAB40733.1"/>
    <property type="molecule type" value="mRNA"/>
</dbReference>
<dbReference type="EMBL" id="X82562">
    <property type="protein sequence ID" value="CAA57909.1"/>
    <property type="molecule type" value="mRNA"/>
</dbReference>
<dbReference type="CCDS" id="CCDS15806.1">
    <molecule id="Q01705-1"/>
</dbReference>
<dbReference type="PIR" id="A46438">
    <property type="entry name" value="A46438"/>
</dbReference>
<dbReference type="PIR" id="B49175">
    <property type="entry name" value="B49175"/>
</dbReference>
<dbReference type="RefSeq" id="NP_032740.3">
    <molecule id="Q01705-1"/>
    <property type="nucleotide sequence ID" value="NM_008714.3"/>
</dbReference>
<dbReference type="PDB" id="1YMP">
    <property type="method" value="X-ray"/>
    <property type="resolution" value="2.20 A"/>
    <property type="chains" value="A/B=1971-2105"/>
</dbReference>
<dbReference type="PDB" id="2QC9">
    <property type="method" value="X-ray"/>
    <property type="resolution" value="2.35 A"/>
    <property type="chains" value="A/B=1899-2106"/>
</dbReference>
<dbReference type="PDB" id="2RQZ">
    <property type="method" value="NMR"/>
    <property type="chains" value="A=452-489"/>
</dbReference>
<dbReference type="PDB" id="2RR0">
    <property type="method" value="NMR"/>
    <property type="chains" value="A=452-489"/>
</dbReference>
<dbReference type="PDB" id="2RR2">
    <property type="method" value="NMR"/>
    <property type="chains" value="A=452-489"/>
</dbReference>
<dbReference type="PDB" id="3P3N">
    <property type="method" value="X-ray"/>
    <property type="resolution" value="2.40 A"/>
    <property type="chains" value="B=1930-1949"/>
</dbReference>
<dbReference type="PDB" id="3P3P">
    <property type="method" value="X-ray"/>
    <property type="resolution" value="2.60 A"/>
    <property type="chains" value="B=1999-2016"/>
</dbReference>
<dbReference type="PDB" id="5KY0">
    <property type="method" value="X-ray"/>
    <property type="resolution" value="1.53 A"/>
    <property type="chains" value="B=452-491"/>
</dbReference>
<dbReference type="PDB" id="5KY4">
    <property type="method" value="X-ray"/>
    <property type="resolution" value="1.47 A"/>
    <property type="chains" value="B=983-1022"/>
</dbReference>
<dbReference type="PDB" id="5KY8">
    <property type="method" value="X-ray"/>
    <property type="resolution" value="1.65 A"/>
    <property type="chains" value="B=452-491"/>
</dbReference>
<dbReference type="PDB" id="5KY9">
    <property type="method" value="X-ray"/>
    <property type="resolution" value="1.83 A"/>
    <property type="chains" value="B=452-491"/>
</dbReference>
<dbReference type="PDB" id="7ABV">
    <property type="method" value="X-ray"/>
    <property type="resolution" value="2.06 A"/>
    <property type="chains" value="A=1446-1717"/>
</dbReference>
<dbReference type="PDBsum" id="1YMP"/>
<dbReference type="PDBsum" id="2QC9"/>
<dbReference type="PDBsum" id="2RQZ"/>
<dbReference type="PDBsum" id="2RR0"/>
<dbReference type="PDBsum" id="2RR2"/>
<dbReference type="PDBsum" id="3P3N"/>
<dbReference type="PDBsum" id="3P3P"/>
<dbReference type="PDBsum" id="5KY0"/>
<dbReference type="PDBsum" id="5KY4"/>
<dbReference type="PDBsum" id="5KY8"/>
<dbReference type="PDBsum" id="5KY9"/>
<dbReference type="PDBsum" id="7ABV"/>
<dbReference type="SMR" id="Q01705"/>
<dbReference type="BioGRID" id="201808">
    <property type="interactions" value="32"/>
</dbReference>
<dbReference type="CORUM" id="Q01705"/>
<dbReference type="DIP" id="DIP-214N"/>
<dbReference type="FunCoup" id="Q01705">
    <property type="interactions" value="1265"/>
</dbReference>
<dbReference type="IntAct" id="Q01705">
    <property type="interactions" value="13"/>
</dbReference>
<dbReference type="MINT" id="Q01705"/>
<dbReference type="STRING" id="10090.ENSMUSP00000028288"/>
<dbReference type="BindingDB" id="Q01705"/>
<dbReference type="ChEMBL" id="CHEMBL4295799"/>
<dbReference type="DrugCentral" id="Q01705"/>
<dbReference type="GlyCosmos" id="Q01705">
    <property type="glycosylation" value="45 sites, No reported glycans"/>
</dbReference>
<dbReference type="GlyGen" id="Q01705">
    <property type="glycosylation" value="59 sites, 4 N-linked glycans (4 sites), 1 O-linked glycan (14 sites)"/>
</dbReference>
<dbReference type="iPTMnet" id="Q01705"/>
<dbReference type="PhosphoSitePlus" id="Q01705"/>
<dbReference type="jPOST" id="Q01705"/>
<dbReference type="PaxDb" id="10090-ENSMUSP00000028288"/>
<dbReference type="PeptideAtlas" id="Q01705"/>
<dbReference type="ProteomicsDB" id="252840">
    <molecule id="Q01705-1"/>
</dbReference>
<dbReference type="ProteomicsDB" id="252841">
    <molecule id="Q01705-2"/>
</dbReference>
<dbReference type="ProteomicsDB" id="252842">
    <molecule id="Q01705-3"/>
</dbReference>
<dbReference type="ProteomicsDB" id="252843">
    <molecule id="Q01705-4"/>
</dbReference>
<dbReference type="ABCD" id="Q01705">
    <property type="antibodies" value="29 sequenced antibodies"/>
</dbReference>
<dbReference type="Antibodypedia" id="8424">
    <property type="antibodies" value="1403 antibodies from 56 providers"/>
</dbReference>
<dbReference type="DNASU" id="18128"/>
<dbReference type="Ensembl" id="ENSMUST00000028288.5">
    <molecule id="Q01705-1"/>
    <property type="protein sequence ID" value="ENSMUSP00000028288.5"/>
    <property type="gene ID" value="ENSMUSG00000026923.16"/>
</dbReference>
<dbReference type="GeneID" id="18128"/>
<dbReference type="KEGG" id="mmu:18128"/>
<dbReference type="UCSC" id="uc008ivl.2">
    <molecule id="Q01705-1"/>
    <property type="organism name" value="mouse"/>
</dbReference>
<dbReference type="AGR" id="MGI:97363"/>
<dbReference type="CTD" id="4851"/>
<dbReference type="MGI" id="MGI:97363">
    <property type="gene designation" value="Notch1"/>
</dbReference>
<dbReference type="VEuPathDB" id="HostDB:ENSMUSG00000026923"/>
<dbReference type="eggNOG" id="KOG1217">
    <property type="taxonomic scope" value="Eukaryota"/>
</dbReference>
<dbReference type="GeneTree" id="ENSGT00940000157157"/>
<dbReference type="HOGENOM" id="CLU_000576_2_0_1"/>
<dbReference type="InParanoid" id="Q01705"/>
<dbReference type="OMA" id="TCHEQRD"/>
<dbReference type="OrthoDB" id="283575at2759"/>
<dbReference type="PhylomeDB" id="Q01705"/>
<dbReference type="TreeFam" id="TF351641"/>
<dbReference type="Reactome" id="R-MMU-1912420">
    <property type="pathway name" value="Pre-NOTCH Processing in Golgi"/>
</dbReference>
<dbReference type="Reactome" id="R-MMU-2122947">
    <property type="pathway name" value="NOTCH1 Intracellular Domain Regulates Transcription"/>
</dbReference>
<dbReference type="Reactome" id="R-MMU-2122948">
    <property type="pathway name" value="Activated NOTCH1 Transmits Signal to the Nucleus"/>
</dbReference>
<dbReference type="Reactome" id="R-MMU-350054">
    <property type="pathway name" value="Notch-HLH transcription pathway"/>
</dbReference>
<dbReference type="Reactome" id="R-MMU-8941856">
    <property type="pathway name" value="RUNX3 regulates NOTCH signaling"/>
</dbReference>
<dbReference type="BioGRID-ORCS" id="18128">
    <property type="hits" value="3 hits in 80 CRISPR screens"/>
</dbReference>
<dbReference type="ChiTaRS" id="Notch1">
    <property type="organism name" value="mouse"/>
</dbReference>
<dbReference type="EvolutionaryTrace" id="Q01705"/>
<dbReference type="PRO" id="PR:Q01705"/>
<dbReference type="Proteomes" id="UP000000589">
    <property type="component" value="Chromosome 2"/>
</dbReference>
<dbReference type="RNAct" id="Q01705">
    <property type="molecule type" value="protein"/>
</dbReference>
<dbReference type="Bgee" id="ENSMUSG00000026923">
    <property type="expression patterns" value="Expressed in hair follicle and 345 other cell types or tissues"/>
</dbReference>
<dbReference type="ExpressionAtlas" id="Q01705">
    <property type="expression patterns" value="baseline and differential"/>
</dbReference>
<dbReference type="GO" id="GO:0001669">
    <property type="term" value="C:acrosomal vesicle"/>
    <property type="evidence" value="ECO:0007669"/>
    <property type="project" value="Ensembl"/>
</dbReference>
<dbReference type="GO" id="GO:0005912">
    <property type="term" value="C:adherens junction"/>
    <property type="evidence" value="ECO:0000314"/>
    <property type="project" value="UniProtKB"/>
</dbReference>
<dbReference type="GO" id="GO:0016324">
    <property type="term" value="C:apical plasma membrane"/>
    <property type="evidence" value="ECO:0000314"/>
    <property type="project" value="UniProtKB"/>
</dbReference>
<dbReference type="GO" id="GO:0071944">
    <property type="term" value="C:cell periphery"/>
    <property type="evidence" value="ECO:0000314"/>
    <property type="project" value="MGI"/>
</dbReference>
<dbReference type="GO" id="GO:0009986">
    <property type="term" value="C:cell surface"/>
    <property type="evidence" value="ECO:0000314"/>
    <property type="project" value="MGI"/>
</dbReference>
<dbReference type="GO" id="GO:0005737">
    <property type="term" value="C:cytoplasm"/>
    <property type="evidence" value="ECO:0000314"/>
    <property type="project" value="MGI"/>
</dbReference>
<dbReference type="GO" id="GO:0031410">
    <property type="term" value="C:cytoplasmic vesicle"/>
    <property type="evidence" value="ECO:0000314"/>
    <property type="project" value="MGI"/>
</dbReference>
<dbReference type="GO" id="GO:0005856">
    <property type="term" value="C:cytoskeleton"/>
    <property type="evidence" value="ECO:0000250"/>
    <property type="project" value="UniProtKB"/>
</dbReference>
<dbReference type="GO" id="GO:0005829">
    <property type="term" value="C:cytosol"/>
    <property type="evidence" value="ECO:0000304"/>
    <property type="project" value="Reactome"/>
</dbReference>
<dbReference type="GO" id="GO:0005783">
    <property type="term" value="C:endoplasmic reticulum"/>
    <property type="evidence" value="ECO:0000314"/>
    <property type="project" value="MGI"/>
</dbReference>
<dbReference type="GO" id="GO:0005789">
    <property type="term" value="C:endoplasmic reticulum membrane"/>
    <property type="evidence" value="ECO:0000304"/>
    <property type="project" value="Reactome"/>
</dbReference>
<dbReference type="GO" id="GO:0010008">
    <property type="term" value="C:endosome membrane"/>
    <property type="evidence" value="ECO:0000304"/>
    <property type="project" value="Reactome"/>
</dbReference>
<dbReference type="GO" id="GO:0005576">
    <property type="term" value="C:extracellular region"/>
    <property type="evidence" value="ECO:0000304"/>
    <property type="project" value="Reactome"/>
</dbReference>
<dbReference type="GO" id="GO:0098978">
    <property type="term" value="C:glutamatergic synapse"/>
    <property type="evidence" value="ECO:0000314"/>
    <property type="project" value="SynGO"/>
</dbReference>
<dbReference type="GO" id="GO:0000139">
    <property type="term" value="C:Golgi membrane"/>
    <property type="evidence" value="ECO:0000304"/>
    <property type="project" value="Reactome"/>
</dbReference>
<dbReference type="GO" id="GO:0030027">
    <property type="term" value="C:lamellipodium"/>
    <property type="evidence" value="ECO:0000250"/>
    <property type="project" value="UniProtKB"/>
</dbReference>
<dbReference type="GO" id="GO:0031902">
    <property type="term" value="C:late endosome membrane"/>
    <property type="evidence" value="ECO:0007669"/>
    <property type="project" value="UniProtKB-SubCell"/>
</dbReference>
<dbReference type="GO" id="GO:0002193">
    <property type="term" value="C:MAML1-RBP-Jkappa- ICN1 complex"/>
    <property type="evidence" value="ECO:0007669"/>
    <property type="project" value="Ensembl"/>
</dbReference>
<dbReference type="GO" id="GO:0005654">
    <property type="term" value="C:nucleoplasm"/>
    <property type="evidence" value="ECO:0000304"/>
    <property type="project" value="Reactome"/>
</dbReference>
<dbReference type="GO" id="GO:0005634">
    <property type="term" value="C:nucleus"/>
    <property type="evidence" value="ECO:0000314"/>
    <property type="project" value="UniProtKB"/>
</dbReference>
<dbReference type="GO" id="GO:0005886">
    <property type="term" value="C:plasma membrane"/>
    <property type="evidence" value="ECO:0000314"/>
    <property type="project" value="BHF-UCL"/>
</dbReference>
<dbReference type="GO" id="GO:0098839">
    <property type="term" value="C:postsynaptic density membrane"/>
    <property type="evidence" value="ECO:0000314"/>
    <property type="project" value="SynGO"/>
</dbReference>
<dbReference type="GO" id="GO:0043235">
    <property type="term" value="C:receptor complex"/>
    <property type="evidence" value="ECO:0000266"/>
    <property type="project" value="MGI"/>
</dbReference>
<dbReference type="GO" id="GO:0001726">
    <property type="term" value="C:ruffle"/>
    <property type="evidence" value="ECO:0000250"/>
    <property type="project" value="UniProtKB"/>
</dbReference>
<dbReference type="GO" id="GO:0098685">
    <property type="term" value="C:Schaffer collateral - CA1 synapse"/>
    <property type="evidence" value="ECO:0000314"/>
    <property type="project" value="SynGO"/>
</dbReference>
<dbReference type="GO" id="GO:0005509">
    <property type="term" value="F:calcium ion binding"/>
    <property type="evidence" value="ECO:0007669"/>
    <property type="project" value="InterPro"/>
</dbReference>
<dbReference type="GO" id="GO:0003682">
    <property type="term" value="F:chromatin binding"/>
    <property type="evidence" value="ECO:0000314"/>
    <property type="project" value="MGI"/>
</dbReference>
<dbReference type="GO" id="GO:0031490">
    <property type="term" value="F:chromatin DNA binding"/>
    <property type="evidence" value="ECO:0000314"/>
    <property type="project" value="MGI"/>
</dbReference>
<dbReference type="GO" id="GO:0000987">
    <property type="term" value="F:cis-regulatory region sequence-specific DNA binding"/>
    <property type="evidence" value="ECO:0007669"/>
    <property type="project" value="Ensembl"/>
</dbReference>
<dbReference type="GO" id="GO:0001228">
    <property type="term" value="F:DNA-binding transcription activator activity, RNA polymerase II-specific"/>
    <property type="evidence" value="ECO:0007669"/>
    <property type="project" value="Ensembl"/>
</dbReference>
<dbReference type="GO" id="GO:0019899">
    <property type="term" value="F:enzyme binding"/>
    <property type="evidence" value="ECO:0000353"/>
    <property type="project" value="UniProtKB"/>
</dbReference>
<dbReference type="GO" id="GO:0004857">
    <property type="term" value="F:enzyme inhibitor activity"/>
    <property type="evidence" value="ECO:0000314"/>
    <property type="project" value="UniProtKB"/>
</dbReference>
<dbReference type="GO" id="GO:0042802">
    <property type="term" value="F:identical protein binding"/>
    <property type="evidence" value="ECO:0007669"/>
    <property type="project" value="Ensembl"/>
</dbReference>
<dbReference type="GO" id="GO:0005112">
    <property type="term" value="F:Notch binding"/>
    <property type="evidence" value="ECO:0000353"/>
    <property type="project" value="MGI"/>
</dbReference>
<dbReference type="GO" id="GO:0003713">
    <property type="term" value="F:transcription coactivator activity"/>
    <property type="evidence" value="ECO:0000314"/>
    <property type="project" value="ARUK-UCL"/>
</dbReference>
<dbReference type="GO" id="GO:0140537">
    <property type="term" value="F:transcription regulator activator activity"/>
    <property type="evidence" value="ECO:0000314"/>
    <property type="project" value="GO_Central"/>
</dbReference>
<dbReference type="GO" id="GO:0004888">
    <property type="term" value="F:transmembrane signaling receptor activity"/>
    <property type="evidence" value="ECO:0007669"/>
    <property type="project" value="Ensembl"/>
</dbReference>
<dbReference type="GO" id="GO:0031100">
    <property type="term" value="P:animal organ regeneration"/>
    <property type="evidence" value="ECO:0007669"/>
    <property type="project" value="Ensembl"/>
</dbReference>
<dbReference type="GO" id="GO:0003180">
    <property type="term" value="P:aortic valve morphogenesis"/>
    <property type="evidence" value="ECO:0000315"/>
    <property type="project" value="BHF-UCL"/>
</dbReference>
<dbReference type="GO" id="GO:0006915">
    <property type="term" value="P:apoptotic process"/>
    <property type="evidence" value="ECO:0000314"/>
    <property type="project" value="MGI"/>
</dbReference>
<dbReference type="GO" id="GO:1902263">
    <property type="term" value="P:apoptotic process involved in embryonic digit morphogenesis"/>
    <property type="evidence" value="ECO:0000315"/>
    <property type="project" value="MGI"/>
</dbReference>
<dbReference type="GO" id="GO:0060842">
    <property type="term" value="P:arterial endothelial cell differentiation"/>
    <property type="evidence" value="ECO:0000315"/>
    <property type="project" value="BHF-UCL"/>
</dbReference>
<dbReference type="GO" id="GO:0048708">
    <property type="term" value="P:astrocyte differentiation"/>
    <property type="evidence" value="ECO:0007669"/>
    <property type="project" value="Ensembl"/>
</dbReference>
<dbReference type="GO" id="GO:0003162">
    <property type="term" value="P:atrioventricular node development"/>
    <property type="evidence" value="ECO:0000315"/>
    <property type="project" value="BHF-UCL"/>
</dbReference>
<dbReference type="GO" id="GO:0003181">
    <property type="term" value="P:atrioventricular valve morphogenesis"/>
    <property type="evidence" value="ECO:0000315"/>
    <property type="project" value="BHF-UCL"/>
</dbReference>
<dbReference type="GO" id="GO:0009912">
    <property type="term" value="P:auditory receptor cell fate commitment"/>
    <property type="evidence" value="ECO:0000315"/>
    <property type="project" value="MGI"/>
</dbReference>
<dbReference type="GO" id="GO:0007409">
    <property type="term" value="P:axonogenesis"/>
    <property type="evidence" value="ECO:0000314"/>
    <property type="project" value="MGI"/>
</dbReference>
<dbReference type="GO" id="GO:0048754">
    <property type="term" value="P:branching morphogenesis of an epithelial tube"/>
    <property type="evidence" value="ECO:0000315"/>
    <property type="project" value="MGI"/>
</dbReference>
<dbReference type="GO" id="GO:0017156">
    <property type="term" value="P:calcium-ion regulated exocytosis"/>
    <property type="evidence" value="ECO:0000315"/>
    <property type="project" value="MGI"/>
</dbReference>
<dbReference type="GO" id="GO:0003209">
    <property type="term" value="P:cardiac atrium morphogenesis"/>
    <property type="evidence" value="ECO:0000315"/>
    <property type="project" value="BHF-UCL"/>
</dbReference>
<dbReference type="GO" id="GO:0003207">
    <property type="term" value="P:cardiac chamber formation"/>
    <property type="evidence" value="ECO:0000315"/>
    <property type="project" value="BHF-UCL"/>
</dbReference>
<dbReference type="GO" id="GO:0060317">
    <property type="term" value="P:cardiac epithelial to mesenchymal transition"/>
    <property type="evidence" value="ECO:0000315"/>
    <property type="project" value="BHF-UCL"/>
</dbReference>
<dbReference type="GO" id="GO:0003214">
    <property type="term" value="P:cardiac left ventricle morphogenesis"/>
    <property type="evidence" value="ECO:0000315"/>
    <property type="project" value="BHF-UCL"/>
</dbReference>
<dbReference type="GO" id="GO:0060379">
    <property type="term" value="P:cardiac muscle cell myoblast differentiation"/>
    <property type="evidence" value="ECO:0000315"/>
    <property type="project" value="BHF-UCL"/>
</dbReference>
<dbReference type="GO" id="GO:0060038">
    <property type="term" value="P:cardiac muscle cell proliferation"/>
    <property type="evidence" value="ECO:0000315"/>
    <property type="project" value="BHF-UCL"/>
</dbReference>
<dbReference type="GO" id="GO:0055008">
    <property type="term" value="P:cardiac muscle tissue morphogenesis"/>
    <property type="evidence" value="ECO:0000315"/>
    <property type="project" value="BHF-UCL"/>
</dbReference>
<dbReference type="GO" id="GO:0003213">
    <property type="term" value="P:cardiac right atrium morphogenesis"/>
    <property type="evidence" value="ECO:0000315"/>
    <property type="project" value="BHF-UCL"/>
</dbReference>
<dbReference type="GO" id="GO:0003219">
    <property type="term" value="P:cardiac right ventricle formation"/>
    <property type="evidence" value="ECO:0000315"/>
    <property type="project" value="MGI"/>
</dbReference>
<dbReference type="GO" id="GO:0060411">
    <property type="term" value="P:cardiac septum morphogenesis"/>
    <property type="evidence" value="ECO:0000315"/>
    <property type="project" value="BHF-UCL"/>
</dbReference>
<dbReference type="GO" id="GO:0060948">
    <property type="term" value="P:cardiac vascular smooth muscle cell development"/>
    <property type="evidence" value="ECO:0000315"/>
    <property type="project" value="BHF-UCL"/>
</dbReference>
<dbReference type="GO" id="GO:0003208">
    <property type="term" value="P:cardiac ventricle morphogenesis"/>
    <property type="evidence" value="ECO:0000315"/>
    <property type="project" value="BHF-UCL"/>
</dbReference>
<dbReference type="GO" id="GO:0030154">
    <property type="term" value="P:cell differentiation"/>
    <property type="evidence" value="ECO:0000315"/>
    <property type="project" value="MGI"/>
</dbReference>
<dbReference type="GO" id="GO:0021515">
    <property type="term" value="P:cell differentiation in spinal cord"/>
    <property type="evidence" value="ECO:0007669"/>
    <property type="project" value="Ensembl"/>
</dbReference>
<dbReference type="GO" id="GO:0003273">
    <property type="term" value="P:cell migration involved in endocardial cushion formation"/>
    <property type="evidence" value="ECO:0000315"/>
    <property type="project" value="BHF-UCL"/>
</dbReference>
<dbReference type="GO" id="GO:0008283">
    <property type="term" value="P:cell population proliferation"/>
    <property type="evidence" value="ECO:0000316"/>
    <property type="project" value="MGI"/>
</dbReference>
<dbReference type="GO" id="GO:0071372">
    <property type="term" value="P:cellular response to follicle-stimulating hormone stimulus"/>
    <property type="evidence" value="ECO:0007669"/>
    <property type="project" value="Ensembl"/>
</dbReference>
<dbReference type="GO" id="GO:0071456">
    <property type="term" value="P:cellular response to hypoxia"/>
    <property type="evidence" value="ECO:0000314"/>
    <property type="project" value="UniProtKB"/>
</dbReference>
<dbReference type="GO" id="GO:0071228">
    <property type="term" value="P:cellular response to tumor cell"/>
    <property type="evidence" value="ECO:0007669"/>
    <property type="project" value="Ensembl"/>
</dbReference>
<dbReference type="GO" id="GO:0035924">
    <property type="term" value="P:cellular response to vascular endothelial growth factor stimulus"/>
    <property type="evidence" value="ECO:0000250"/>
    <property type="project" value="UniProtKB"/>
</dbReference>
<dbReference type="GO" id="GO:0021953">
    <property type="term" value="P:central nervous system neuron differentiation"/>
    <property type="evidence" value="ECO:0000315"/>
    <property type="project" value="MGI"/>
</dbReference>
<dbReference type="GO" id="GO:0099565">
    <property type="term" value="P:chemical synaptic transmission, postsynaptic"/>
    <property type="evidence" value="ECO:0000314"/>
    <property type="project" value="SynGO"/>
</dbReference>
<dbReference type="GO" id="GO:0060271">
    <property type="term" value="P:cilium assembly"/>
    <property type="evidence" value="ECO:0000250"/>
    <property type="project" value="UniProtKB"/>
</dbReference>
<dbReference type="GO" id="GO:0072044">
    <property type="term" value="P:collecting duct development"/>
    <property type="evidence" value="ECO:0000270"/>
    <property type="project" value="UniProtKB"/>
</dbReference>
<dbReference type="GO" id="GO:0007386">
    <property type="term" value="P:compartment pattern specification"/>
    <property type="evidence" value="ECO:0000315"/>
    <property type="project" value="MGI"/>
</dbReference>
<dbReference type="GO" id="GO:0060982">
    <property type="term" value="P:coronary artery morphogenesis"/>
    <property type="evidence" value="ECO:0000315"/>
    <property type="project" value="BHF-UCL"/>
</dbReference>
<dbReference type="GO" id="GO:0003182">
    <property type="term" value="P:coronary sinus valve morphogenesis"/>
    <property type="evidence" value="ECO:0000315"/>
    <property type="project" value="BHF-UCL"/>
</dbReference>
<dbReference type="GO" id="GO:0003169">
    <property type="term" value="P:coronary vein morphogenesis"/>
    <property type="evidence" value="ECO:0000315"/>
    <property type="project" value="BHF-UCL"/>
</dbReference>
<dbReference type="GO" id="GO:0007368">
    <property type="term" value="P:determination of left/right symmetry"/>
    <property type="evidence" value="ECO:0000315"/>
    <property type="project" value="MGI"/>
</dbReference>
<dbReference type="GO" id="GO:0072017">
    <property type="term" value="P:distal tubule development"/>
    <property type="evidence" value="ECO:0000270"/>
    <property type="project" value="UniProtKB"/>
</dbReference>
<dbReference type="GO" id="GO:0035116">
    <property type="term" value="P:embryonic hindlimb morphogenesis"/>
    <property type="evidence" value="ECO:0000315"/>
    <property type="project" value="MGI"/>
</dbReference>
<dbReference type="GO" id="GO:0030326">
    <property type="term" value="P:embryonic limb morphogenesis"/>
    <property type="evidence" value="ECO:0000316"/>
    <property type="project" value="MGI"/>
</dbReference>
<dbReference type="GO" id="GO:0060956">
    <property type="term" value="P:endocardial cell differentiation"/>
    <property type="evidence" value="ECO:0000315"/>
    <property type="project" value="BHF-UCL"/>
</dbReference>
<dbReference type="GO" id="GO:0003197">
    <property type="term" value="P:endocardial cushion development"/>
    <property type="evidence" value="ECO:0000315"/>
    <property type="project" value="MGI"/>
</dbReference>
<dbReference type="GO" id="GO:0003203">
    <property type="term" value="P:endocardial cushion morphogenesis"/>
    <property type="evidence" value="ECO:0000315"/>
    <property type="project" value="BHF-UCL"/>
</dbReference>
<dbReference type="GO" id="GO:0003157">
    <property type="term" value="P:endocardium development"/>
    <property type="evidence" value="ECO:0000315"/>
    <property type="project" value="BHF-UCL"/>
</dbReference>
<dbReference type="GO" id="GO:0003160">
    <property type="term" value="P:endocardium morphogenesis"/>
    <property type="evidence" value="ECO:0000315"/>
    <property type="project" value="BHF-UCL"/>
</dbReference>
<dbReference type="GO" id="GO:0007492">
    <property type="term" value="P:endoderm development"/>
    <property type="evidence" value="ECO:0000315"/>
    <property type="project" value="MGI"/>
</dbReference>
<dbReference type="GO" id="GO:0009957">
    <property type="term" value="P:epidermal cell fate specification"/>
    <property type="evidence" value="ECO:0000315"/>
    <property type="project" value="MGI"/>
</dbReference>
<dbReference type="GO" id="GO:0008544">
    <property type="term" value="P:epidermis development"/>
    <property type="evidence" value="ECO:0000316"/>
    <property type="project" value="MGI"/>
</dbReference>
<dbReference type="GO" id="GO:0072148">
    <property type="term" value="P:epithelial cell fate commitment"/>
    <property type="evidence" value="ECO:0000315"/>
    <property type="project" value="MGI"/>
</dbReference>
<dbReference type="GO" id="GO:0050673">
    <property type="term" value="P:epithelial cell proliferation"/>
    <property type="evidence" value="ECO:0000315"/>
    <property type="project" value="MGI"/>
</dbReference>
<dbReference type="GO" id="GO:0001837">
    <property type="term" value="P:epithelial to mesenchymal transition"/>
    <property type="evidence" value="ECO:0000315"/>
    <property type="project" value="MGI"/>
</dbReference>
<dbReference type="GO" id="GO:0003198">
    <property type="term" value="P:epithelial to mesenchymal transition involved in endocardial cushion formation"/>
    <property type="evidence" value="ECO:0000315"/>
    <property type="project" value="BHF-UCL"/>
</dbReference>
<dbReference type="GO" id="GO:0030900">
    <property type="term" value="P:forebrain development"/>
    <property type="evidence" value="ECO:0000315"/>
    <property type="project" value="MGI"/>
</dbReference>
<dbReference type="GO" id="GO:0007440">
    <property type="term" value="P:foregut morphogenesis"/>
    <property type="evidence" value="ECO:0000315"/>
    <property type="project" value="MGI"/>
</dbReference>
<dbReference type="GO" id="GO:0010467">
    <property type="term" value="P:gene expression"/>
    <property type="evidence" value="ECO:0000314"/>
    <property type="project" value="MGI"/>
</dbReference>
<dbReference type="GO" id="GO:0010001">
    <property type="term" value="P:glial cell differentiation"/>
    <property type="evidence" value="ECO:0000315"/>
    <property type="project" value="MGI"/>
</dbReference>
<dbReference type="GO" id="GO:0072144">
    <property type="term" value="P:glomerular mesangial cell development"/>
    <property type="evidence" value="ECO:0000270"/>
    <property type="project" value="UniProtKB"/>
</dbReference>
<dbReference type="GO" id="GO:0003241">
    <property type="term" value="P:growth involved in heart morphogenesis"/>
    <property type="evidence" value="ECO:0000315"/>
    <property type="project" value="BHF-UCL"/>
</dbReference>
<dbReference type="GO" id="GO:0031069">
    <property type="term" value="P:hair follicle morphogenesis"/>
    <property type="evidence" value="ECO:0000315"/>
    <property type="project" value="MGI"/>
</dbReference>
<dbReference type="GO" id="GO:0001947">
    <property type="term" value="P:heart looping"/>
    <property type="evidence" value="ECO:0000316"/>
    <property type="project" value="BHF-UCL"/>
</dbReference>
<dbReference type="GO" id="GO:0061384">
    <property type="term" value="P:heart trabecula morphogenesis"/>
    <property type="evidence" value="ECO:0000315"/>
    <property type="project" value="BHF-UCL"/>
</dbReference>
<dbReference type="GO" id="GO:0048873">
    <property type="term" value="P:homeostasis of number of cells within a tissue"/>
    <property type="evidence" value="ECO:0000316"/>
    <property type="project" value="BHF-UCL"/>
</dbReference>
<dbReference type="GO" id="GO:0006959">
    <property type="term" value="P:humoral immune response"/>
    <property type="evidence" value="ECO:0000316"/>
    <property type="project" value="MGI"/>
</dbReference>
<dbReference type="GO" id="GO:0001701">
    <property type="term" value="P:in utero embryonic development"/>
    <property type="evidence" value="ECO:0000315"/>
    <property type="project" value="MGI"/>
</dbReference>
<dbReference type="GO" id="GO:0002437">
    <property type="term" value="P:inflammatory response to antigenic stimulus"/>
    <property type="evidence" value="ECO:0000316"/>
    <property type="project" value="MGI"/>
</dbReference>
<dbReference type="GO" id="GO:0002085">
    <property type="term" value="P:inhibition of neuroepithelial cell differentiation"/>
    <property type="evidence" value="ECO:0000315"/>
    <property type="project" value="MGI"/>
</dbReference>
<dbReference type="GO" id="GO:0097400">
    <property type="term" value="P:interleukin-17-mediated signaling pathway"/>
    <property type="evidence" value="ECO:0000314"/>
    <property type="project" value="MGI"/>
</dbReference>
<dbReference type="GO" id="GO:0030216">
    <property type="term" value="P:keratinocyte differentiation"/>
    <property type="evidence" value="ECO:0000315"/>
    <property type="project" value="MGI"/>
</dbReference>
<dbReference type="GO" id="GO:0070986">
    <property type="term" value="P:left/right axis specification"/>
    <property type="evidence" value="ECO:0000316"/>
    <property type="project" value="BHF-UCL"/>
</dbReference>
<dbReference type="GO" id="GO:0001889">
    <property type="term" value="P:liver development"/>
    <property type="evidence" value="ECO:0000315"/>
    <property type="project" value="MGI"/>
</dbReference>
<dbReference type="GO" id="GO:0030324">
    <property type="term" value="P:lung development"/>
    <property type="evidence" value="ECO:0000315"/>
    <property type="project" value="MGI"/>
</dbReference>
<dbReference type="GO" id="GO:0001554">
    <property type="term" value="P:luteolysis"/>
    <property type="evidence" value="ECO:0007669"/>
    <property type="project" value="Ensembl"/>
</dbReference>
<dbReference type="GO" id="GO:0014031">
    <property type="term" value="P:mesenchymal cell development"/>
    <property type="evidence" value="ECO:0000315"/>
    <property type="project" value="BHF-UCL"/>
</dbReference>
<dbReference type="GO" id="GO:0003192">
    <property type="term" value="P:mitral valve formation"/>
    <property type="evidence" value="ECO:0007669"/>
    <property type="project" value="Ensembl"/>
</dbReference>
<dbReference type="GO" id="GO:2000811">
    <property type="term" value="P:negative regulation of anoikis"/>
    <property type="evidence" value="ECO:0007669"/>
    <property type="project" value="Ensembl"/>
</dbReference>
<dbReference type="GO" id="GO:0070168">
    <property type="term" value="P:negative regulation of biomineral tissue development"/>
    <property type="evidence" value="ECO:0000314"/>
    <property type="project" value="BHF-UCL"/>
</dbReference>
<dbReference type="GO" id="GO:0030514">
    <property type="term" value="P:negative regulation of BMP signaling pathway"/>
    <property type="evidence" value="ECO:0000315"/>
    <property type="project" value="BHF-UCL"/>
</dbReference>
<dbReference type="GO" id="GO:0045955">
    <property type="term" value="P:negative regulation of calcium ion-dependent exocytosis"/>
    <property type="evidence" value="ECO:0000315"/>
    <property type="project" value="MGI"/>
</dbReference>
<dbReference type="GO" id="GO:0090090">
    <property type="term" value="P:negative regulation of canonical Wnt signaling pathway"/>
    <property type="evidence" value="ECO:0000315"/>
    <property type="project" value="MGI"/>
</dbReference>
<dbReference type="GO" id="GO:0010667">
    <property type="term" value="P:negative regulation of cardiac muscle cell apoptotic process"/>
    <property type="evidence" value="ECO:0007669"/>
    <property type="project" value="Ensembl"/>
</dbReference>
<dbReference type="GO" id="GO:0010614">
    <property type="term" value="P:negative regulation of cardiac muscle hypertrophy"/>
    <property type="evidence" value="ECO:0000315"/>
    <property type="project" value="BHF-UCL"/>
</dbReference>
<dbReference type="GO" id="GO:0043086">
    <property type="term" value="P:negative regulation of catalytic activity"/>
    <property type="evidence" value="ECO:0000314"/>
    <property type="project" value="UniProtKB"/>
</dbReference>
<dbReference type="GO" id="GO:0060354">
    <property type="term" value="P:negative regulation of cell adhesion molecule production"/>
    <property type="evidence" value="ECO:0007669"/>
    <property type="project" value="Ensembl"/>
</dbReference>
<dbReference type="GO" id="GO:0090051">
    <property type="term" value="P:negative regulation of cell migration involved in sprouting angiogenesis"/>
    <property type="evidence" value="ECO:0000250"/>
    <property type="project" value="UniProtKB"/>
</dbReference>
<dbReference type="GO" id="GO:0008285">
    <property type="term" value="P:negative regulation of cell population proliferation"/>
    <property type="evidence" value="ECO:0000250"/>
    <property type="project" value="UniProtKB"/>
</dbReference>
<dbReference type="GO" id="GO:0003252">
    <property type="term" value="P:negative regulation of cell proliferation involved in heart valve morphogenesis"/>
    <property type="evidence" value="ECO:0000314"/>
    <property type="project" value="BHF-UCL"/>
</dbReference>
<dbReference type="GO" id="GO:2000048">
    <property type="term" value="P:negative regulation of cell-cell adhesion mediated by cadherin"/>
    <property type="evidence" value="ECO:0007669"/>
    <property type="project" value="Ensembl"/>
</dbReference>
<dbReference type="GO" id="GO:0010812">
    <property type="term" value="P:negative regulation of cell-substrate adhesion"/>
    <property type="evidence" value="ECO:0007669"/>
    <property type="project" value="Ensembl"/>
</dbReference>
<dbReference type="GO" id="GO:0120163">
    <property type="term" value="P:negative regulation of cold-induced thermogenesis"/>
    <property type="evidence" value="ECO:0000315"/>
    <property type="project" value="YuBioLab"/>
</dbReference>
<dbReference type="GO" id="GO:0032966">
    <property type="term" value="P:negative regulation of collagen biosynthetic process"/>
    <property type="evidence" value="ECO:0007669"/>
    <property type="project" value="Ensembl"/>
</dbReference>
<dbReference type="GO" id="GO:0045892">
    <property type="term" value="P:negative regulation of DNA-templated transcription"/>
    <property type="evidence" value="ECO:0000314"/>
    <property type="project" value="BHF-UCL"/>
</dbReference>
<dbReference type="GO" id="GO:2001027">
    <property type="term" value="P:negative regulation of endothelial cell chemotaxis"/>
    <property type="evidence" value="ECO:0000250"/>
    <property type="project" value="UniProtKB"/>
</dbReference>
<dbReference type="GO" id="GO:0050680">
    <property type="term" value="P:negative regulation of epithelial cell proliferation"/>
    <property type="evidence" value="ECO:0000315"/>
    <property type="project" value="MGI"/>
</dbReference>
<dbReference type="GO" id="GO:0003332">
    <property type="term" value="P:negative regulation of extracellular matrix constituent secretion"/>
    <property type="evidence" value="ECO:0000315"/>
    <property type="project" value="BHF-UCL"/>
</dbReference>
<dbReference type="GO" id="GO:0010629">
    <property type="term" value="P:negative regulation of gene expression"/>
    <property type="evidence" value="ECO:0007669"/>
    <property type="project" value="Ensembl"/>
</dbReference>
<dbReference type="GO" id="GO:0060253">
    <property type="term" value="P:negative regulation of glial cell proliferation"/>
    <property type="evidence" value="ECO:0000314"/>
    <property type="project" value="UniProtKB"/>
</dbReference>
<dbReference type="GO" id="GO:0045608">
    <property type="term" value="P:negative regulation of inner ear auditory receptor cell differentiation"/>
    <property type="evidence" value="ECO:0000315"/>
    <property type="project" value="MGI"/>
</dbReference>
<dbReference type="GO" id="GO:0045662">
    <property type="term" value="P:negative regulation of myoblast differentiation"/>
    <property type="evidence" value="ECO:0007669"/>
    <property type="project" value="Ensembl"/>
</dbReference>
<dbReference type="GO" id="GO:0010832">
    <property type="term" value="P:negative regulation of myotube differentiation"/>
    <property type="evidence" value="ECO:0000315"/>
    <property type="project" value="UniProtKB"/>
</dbReference>
<dbReference type="GO" id="GO:0050768">
    <property type="term" value="P:negative regulation of neurogenesis"/>
    <property type="evidence" value="ECO:0000315"/>
    <property type="project" value="UniProtKB"/>
</dbReference>
<dbReference type="GO" id="GO:0045665">
    <property type="term" value="P:negative regulation of neuron differentiation"/>
    <property type="evidence" value="ECO:0000315"/>
    <property type="project" value="MGI"/>
</dbReference>
<dbReference type="GO" id="GO:0048715">
    <property type="term" value="P:negative regulation of oligodendrocyte differentiation"/>
    <property type="evidence" value="ECO:0000314"/>
    <property type="project" value="UniProtKB"/>
</dbReference>
<dbReference type="GO" id="GO:0030279">
    <property type="term" value="P:negative regulation of ossification"/>
    <property type="evidence" value="ECO:0000315"/>
    <property type="project" value="BHF-UCL"/>
</dbReference>
<dbReference type="GO" id="GO:0045668">
    <property type="term" value="P:negative regulation of osteoblast differentiation"/>
    <property type="evidence" value="ECO:0000315"/>
    <property type="project" value="BHF-UCL"/>
</dbReference>
<dbReference type="GO" id="GO:0046533">
    <property type="term" value="P:negative regulation of photoreceptor cell differentiation"/>
    <property type="evidence" value="ECO:0000315"/>
    <property type="project" value="MGI"/>
</dbReference>
<dbReference type="GO" id="GO:2000974">
    <property type="term" value="P:negative regulation of pro-B cell differentiation"/>
    <property type="evidence" value="ECO:0000315"/>
    <property type="project" value="UniProtKB"/>
</dbReference>
<dbReference type="GO" id="GO:0043069">
    <property type="term" value="P:negative regulation of programmed cell death"/>
    <property type="evidence" value="ECO:0000315"/>
    <property type="project" value="MGI"/>
</dbReference>
<dbReference type="GO" id="GO:2000737">
    <property type="term" value="P:negative regulation of stem cell differentiation"/>
    <property type="evidence" value="ECO:0007669"/>
    <property type="project" value="Ensembl"/>
</dbReference>
<dbReference type="GO" id="GO:0000122">
    <property type="term" value="P:negative regulation of transcription by RNA polymerase II"/>
    <property type="evidence" value="ECO:0000314"/>
    <property type="project" value="UniProtKB"/>
</dbReference>
<dbReference type="GO" id="GO:0021915">
    <property type="term" value="P:neural tube development"/>
    <property type="evidence" value="ECO:0000315"/>
    <property type="project" value="MGI"/>
</dbReference>
<dbReference type="GO" id="GO:0061101">
    <property type="term" value="P:neuroendocrine cell differentiation"/>
    <property type="evidence" value="ECO:0000315"/>
    <property type="project" value="MGI"/>
</dbReference>
<dbReference type="GO" id="GO:0030182">
    <property type="term" value="P:neuron differentiation"/>
    <property type="evidence" value="ECO:0000315"/>
    <property type="project" value="MGI"/>
</dbReference>
<dbReference type="GO" id="GO:0048663">
    <property type="term" value="P:neuron fate commitment"/>
    <property type="evidence" value="ECO:0000316"/>
    <property type="project" value="MGI"/>
</dbReference>
<dbReference type="GO" id="GO:0097150">
    <property type="term" value="P:neuronal stem cell population maintenance"/>
    <property type="evidence" value="ECO:0007669"/>
    <property type="project" value="Ensembl"/>
</dbReference>
<dbReference type="GO" id="GO:0007219">
    <property type="term" value="P:Notch signaling pathway"/>
    <property type="evidence" value="ECO:0000314"/>
    <property type="project" value="MGI"/>
</dbReference>
<dbReference type="GO" id="GO:0003270">
    <property type="term" value="P:Notch signaling pathway involved in regulation of secondary heart field cardioblast proliferation"/>
    <property type="evidence" value="ECO:0000315"/>
    <property type="project" value="MGI"/>
</dbReference>
<dbReference type="GO" id="GO:0048709">
    <property type="term" value="P:oligodendrocyte differentiation"/>
    <property type="evidence" value="ECO:0000315"/>
    <property type="project" value="MGI"/>
</dbReference>
<dbReference type="GO" id="GO:0002051">
    <property type="term" value="P:osteoblast fate commitment"/>
    <property type="evidence" value="ECO:0000303"/>
    <property type="project" value="BHF-UCL"/>
</dbReference>
<dbReference type="GO" id="GO:0003151">
    <property type="term" value="P:outflow tract morphogenesis"/>
    <property type="evidence" value="ECO:0007669"/>
    <property type="project" value="Ensembl"/>
</dbReference>
<dbReference type="GO" id="GO:0003344">
    <property type="term" value="P:pericardium morphogenesis"/>
    <property type="evidence" value="ECO:0000315"/>
    <property type="project" value="BHF-UCL"/>
</dbReference>
<dbReference type="GO" id="GO:1903849">
    <property type="term" value="P:positive regulation of aorta morphogenesis"/>
    <property type="evidence" value="ECO:0000315"/>
    <property type="project" value="MGI"/>
</dbReference>
<dbReference type="GO" id="GO:0043065">
    <property type="term" value="P:positive regulation of apoptotic process"/>
    <property type="evidence" value="ECO:0000314"/>
    <property type="project" value="MGI"/>
</dbReference>
<dbReference type="GO" id="GO:1902339">
    <property type="term" value="P:positive regulation of apoptotic process involved in morphogenesis"/>
    <property type="evidence" value="ECO:0000314"/>
    <property type="project" value="BHF-UCL"/>
</dbReference>
<dbReference type="GO" id="GO:0048711">
    <property type="term" value="P:positive regulation of astrocyte differentiation"/>
    <property type="evidence" value="ECO:0000314"/>
    <property type="project" value="UniProtKB"/>
</dbReference>
<dbReference type="GO" id="GO:0030513">
    <property type="term" value="P:positive regulation of BMP signaling pathway"/>
    <property type="evidence" value="ECO:0000314"/>
    <property type="project" value="UniProtKB"/>
</dbReference>
<dbReference type="GO" id="GO:0062043">
    <property type="term" value="P:positive regulation of cardiac epithelial to mesenchymal transition"/>
    <property type="evidence" value="ECO:0007669"/>
    <property type="project" value="Ensembl"/>
</dbReference>
<dbReference type="GO" id="GO:0060045">
    <property type="term" value="P:positive regulation of cardiac muscle cell proliferation"/>
    <property type="evidence" value="ECO:0000315"/>
    <property type="project" value="BHF-UCL"/>
</dbReference>
<dbReference type="GO" id="GO:0030335">
    <property type="term" value="P:positive regulation of cell migration"/>
    <property type="evidence" value="ECO:0000315"/>
    <property type="project" value="BHF-UCL"/>
</dbReference>
<dbReference type="GO" id="GO:0045893">
    <property type="term" value="P:positive regulation of DNA-templated transcription"/>
    <property type="evidence" value="ECO:0000314"/>
    <property type="project" value="UniProtKB"/>
</dbReference>
<dbReference type="GO" id="GO:0045603">
    <property type="term" value="P:positive regulation of endothelial cell differentiation"/>
    <property type="evidence" value="ECO:0007669"/>
    <property type="project" value="Ensembl"/>
</dbReference>
<dbReference type="GO" id="GO:1901189">
    <property type="term" value="P:positive regulation of ephrin receptor signaling pathway"/>
    <property type="evidence" value="ECO:0000305"/>
    <property type="project" value="BHF-UCL"/>
</dbReference>
<dbReference type="GO" id="GO:0050679">
    <property type="term" value="P:positive regulation of epithelial cell proliferation"/>
    <property type="evidence" value="ECO:0000316"/>
    <property type="project" value="MGI"/>
</dbReference>
<dbReference type="GO" id="GO:0010718">
    <property type="term" value="P:positive regulation of epithelial to mesenchymal transition"/>
    <property type="evidence" value="ECO:0000315"/>
    <property type="project" value="BHF-UCL"/>
</dbReference>
<dbReference type="GO" id="GO:0070374">
    <property type="term" value="P:positive regulation of ERK1 and ERK2 cascade"/>
    <property type="evidence" value="ECO:0007669"/>
    <property type="project" value="Ensembl"/>
</dbReference>
<dbReference type="GO" id="GO:0010628">
    <property type="term" value="P:positive regulation of gene expression"/>
    <property type="evidence" value="ECO:0000316"/>
    <property type="project" value="BHF-UCL"/>
</dbReference>
<dbReference type="GO" id="GO:0045618">
    <property type="term" value="P:positive regulation of keratinocyte differentiation"/>
    <property type="evidence" value="ECO:0000314"/>
    <property type="project" value="MGI"/>
</dbReference>
<dbReference type="GO" id="GO:0002052">
    <property type="term" value="P:positive regulation of neuroblast proliferation"/>
    <property type="evidence" value="ECO:0007669"/>
    <property type="project" value="Ensembl"/>
</dbReference>
<dbReference type="GO" id="GO:0045747">
    <property type="term" value="P:positive regulation of Notch signaling pathway"/>
    <property type="evidence" value="ECO:0000314"/>
    <property type="project" value="MGI"/>
</dbReference>
<dbReference type="GO" id="GO:0046579">
    <property type="term" value="P:positive regulation of Ras protein signal transduction"/>
    <property type="evidence" value="ECO:0007669"/>
    <property type="project" value="Ensembl"/>
</dbReference>
<dbReference type="GO" id="GO:0046427">
    <property type="term" value="P:positive regulation of receptor signaling pathway via JAK-STAT"/>
    <property type="evidence" value="ECO:0000314"/>
    <property type="project" value="UniProtKB"/>
</dbReference>
<dbReference type="GO" id="GO:0051152">
    <property type="term" value="P:positive regulation of smooth muscle cell differentiation"/>
    <property type="evidence" value="ECO:0007669"/>
    <property type="project" value="Ensembl"/>
</dbReference>
<dbReference type="GO" id="GO:0045944">
    <property type="term" value="P:positive regulation of transcription by RNA polymerase II"/>
    <property type="evidence" value="ECO:0000314"/>
    <property type="project" value="UniProtKB"/>
</dbReference>
<dbReference type="GO" id="GO:0007221">
    <property type="term" value="P:positive regulation of transcription of Notch receptor target"/>
    <property type="evidence" value="ECO:0000316"/>
    <property type="project" value="MGI"/>
</dbReference>
<dbReference type="GO" id="GO:0045070">
    <property type="term" value="P:positive regulation of viral genome replication"/>
    <property type="evidence" value="ECO:0000315"/>
    <property type="project" value="AgBase"/>
</dbReference>
<dbReference type="GO" id="GO:0060740">
    <property type="term" value="P:prostate gland epithelium morphogenesis"/>
    <property type="evidence" value="ECO:0000315"/>
    <property type="project" value="MGI"/>
</dbReference>
<dbReference type="GO" id="GO:0030163">
    <property type="term" value="P:protein catabolic process"/>
    <property type="evidence" value="ECO:0000314"/>
    <property type="project" value="MGI"/>
</dbReference>
<dbReference type="GO" id="GO:0006606">
    <property type="term" value="P:protein import into nucleus"/>
    <property type="evidence" value="ECO:0000314"/>
    <property type="project" value="MGI"/>
</dbReference>
<dbReference type="GO" id="GO:0003184">
    <property type="term" value="P:pulmonary valve morphogenesis"/>
    <property type="evidence" value="ECO:0000315"/>
    <property type="project" value="BHF-UCL"/>
</dbReference>
<dbReference type="GO" id="GO:0061344">
    <property type="term" value="P:regulation of cell adhesion involved in heart morphogenesis"/>
    <property type="evidence" value="ECO:0000315"/>
    <property type="project" value="BHF-UCL"/>
</dbReference>
<dbReference type="GO" id="GO:0030334">
    <property type="term" value="P:regulation of cell migration"/>
    <property type="evidence" value="ECO:0000315"/>
    <property type="project" value="BHF-UCL"/>
</dbReference>
<dbReference type="GO" id="GO:0050678">
    <property type="term" value="P:regulation of epithelial cell proliferation"/>
    <property type="evidence" value="ECO:0000315"/>
    <property type="project" value="MGI"/>
</dbReference>
<dbReference type="GO" id="GO:0060768">
    <property type="term" value="P:regulation of epithelial cell proliferation involved in prostate gland development"/>
    <property type="evidence" value="ECO:0000315"/>
    <property type="project" value="MGI"/>
</dbReference>
<dbReference type="GO" id="GO:1901201">
    <property type="term" value="P:regulation of extracellular matrix assembly"/>
    <property type="evidence" value="ECO:0000315"/>
    <property type="project" value="BHF-UCL"/>
</dbReference>
<dbReference type="GO" id="GO:0010468">
    <property type="term" value="P:regulation of gene expression"/>
    <property type="evidence" value="ECO:0000315"/>
    <property type="project" value="MGI"/>
</dbReference>
<dbReference type="GO" id="GO:0045607">
    <property type="term" value="P:regulation of inner ear auditory receptor cell differentiation"/>
    <property type="evidence" value="ECO:0000315"/>
    <property type="project" value="MGI"/>
</dbReference>
<dbReference type="GO" id="GO:0050767">
    <property type="term" value="P:regulation of neurogenesis"/>
    <property type="evidence" value="ECO:0000315"/>
    <property type="project" value="MGI"/>
</dbReference>
<dbReference type="GO" id="GO:0008593">
    <property type="term" value="P:regulation of Notch signaling pathway"/>
    <property type="evidence" value="ECO:0000316"/>
    <property type="project" value="MGI"/>
</dbReference>
<dbReference type="GO" id="GO:0014807">
    <property type="term" value="P:regulation of somitogenesis"/>
    <property type="evidence" value="ECO:0000315"/>
    <property type="project" value="MGI"/>
</dbReference>
<dbReference type="GO" id="GO:0072091">
    <property type="term" value="P:regulation of stem cell proliferation"/>
    <property type="evidence" value="ECO:0000315"/>
    <property type="project" value="MGI"/>
</dbReference>
<dbReference type="GO" id="GO:0006357">
    <property type="term" value="P:regulation of transcription by RNA polymerase II"/>
    <property type="evidence" value="ECO:0000315"/>
    <property type="project" value="BHF-UCL"/>
</dbReference>
<dbReference type="GO" id="GO:0032496">
    <property type="term" value="P:response to lipopolysaccharide"/>
    <property type="evidence" value="ECO:0007669"/>
    <property type="project" value="Ensembl"/>
</dbReference>
<dbReference type="GO" id="GO:0032495">
    <property type="term" value="P:response to muramyl dipeptide"/>
    <property type="evidence" value="ECO:0000314"/>
    <property type="project" value="BHF-UCL"/>
</dbReference>
<dbReference type="GO" id="GO:0042670">
    <property type="term" value="P:retinal cone cell differentiation"/>
    <property type="evidence" value="ECO:0000315"/>
    <property type="project" value="MGI"/>
</dbReference>
<dbReference type="GO" id="GO:0060528">
    <property type="term" value="P:secretory columnal luminar epithelial cell differentiation involved in prostate glandular acinus development"/>
    <property type="evidence" value="ECO:0000315"/>
    <property type="project" value="MGI"/>
</dbReference>
<dbReference type="GO" id="GO:0035914">
    <property type="term" value="P:skeletal muscle cell differentiation"/>
    <property type="evidence" value="ECO:0000315"/>
    <property type="project" value="MGI"/>
</dbReference>
<dbReference type="GO" id="GO:0048103">
    <property type="term" value="P:somatic stem cell division"/>
    <property type="evidence" value="ECO:0000314"/>
    <property type="project" value="MGI"/>
</dbReference>
<dbReference type="GO" id="GO:0007283">
    <property type="term" value="P:spermatogenesis"/>
    <property type="evidence" value="ECO:0007669"/>
    <property type="project" value="Ensembl"/>
</dbReference>
<dbReference type="GO" id="GO:0002040">
    <property type="term" value="P:sprouting angiogenesis"/>
    <property type="evidence" value="ECO:0000315"/>
    <property type="project" value="MGI"/>
</dbReference>
<dbReference type="GO" id="GO:0072538">
    <property type="term" value="P:T-helper 17 type immune response"/>
    <property type="evidence" value="ECO:0000314"/>
    <property type="project" value="MGI"/>
</dbReference>
<dbReference type="GO" id="GO:0042246">
    <property type="term" value="P:tissue regeneration"/>
    <property type="evidence" value="ECO:0007669"/>
    <property type="project" value="Ensembl"/>
</dbReference>
<dbReference type="GO" id="GO:0006366">
    <property type="term" value="P:transcription by RNA polymerase II"/>
    <property type="evidence" value="ECO:0000314"/>
    <property type="project" value="MGI"/>
</dbReference>
<dbReference type="GO" id="GO:0035148">
    <property type="term" value="P:tube formation"/>
    <property type="evidence" value="ECO:0000250"/>
    <property type="project" value="UniProtKB"/>
</dbReference>
<dbReference type="GO" id="GO:0060979">
    <property type="term" value="P:vasculogenesis involved in coronary vascular morphogenesis"/>
    <property type="evidence" value="ECO:0000315"/>
    <property type="project" value="BHF-UCL"/>
</dbReference>
<dbReference type="GO" id="GO:0048845">
    <property type="term" value="P:venous blood vessel morphogenesis"/>
    <property type="evidence" value="ECO:0000315"/>
    <property type="project" value="MGI"/>
</dbReference>
<dbReference type="GO" id="GO:0060843">
    <property type="term" value="P:venous endothelial cell differentiation"/>
    <property type="evidence" value="ECO:0000315"/>
    <property type="project" value="BHF-UCL"/>
</dbReference>
<dbReference type="GO" id="GO:0060412">
    <property type="term" value="P:ventricular septum morphogenesis"/>
    <property type="evidence" value="ECO:0000315"/>
    <property type="project" value="BHF-UCL"/>
</dbReference>
<dbReference type="GO" id="GO:0003222">
    <property type="term" value="P:ventricular trabecula myocardium morphogenesis"/>
    <property type="evidence" value="ECO:0000315"/>
    <property type="project" value="BHF-UCL"/>
</dbReference>
<dbReference type="CDD" id="cd00054">
    <property type="entry name" value="EGF_CA"/>
    <property type="match status" value="29"/>
</dbReference>
<dbReference type="CDD" id="cd21702">
    <property type="entry name" value="JMTM_Notch1"/>
    <property type="match status" value="1"/>
</dbReference>
<dbReference type="FunFam" id="2.10.25.10:FF:000123">
    <property type="entry name" value="Crumbs homolog 1 (Drosophila)"/>
    <property type="match status" value="1"/>
</dbReference>
<dbReference type="FunFam" id="2.10.25.10:FF:000151">
    <property type="entry name" value="FAT atypical cadherin 4"/>
    <property type="match status" value="1"/>
</dbReference>
<dbReference type="FunFam" id="1.25.40.20:FF:000005">
    <property type="entry name" value="Neurogenic locus notch 1"/>
    <property type="match status" value="1"/>
</dbReference>
<dbReference type="FunFam" id="2.10.25.10:FF:000004">
    <property type="entry name" value="Neurogenic locus notch 1"/>
    <property type="match status" value="8"/>
</dbReference>
<dbReference type="FunFam" id="2.10.25.10:FF:000080">
    <property type="entry name" value="Neurogenic locus notch 1"/>
    <property type="match status" value="2"/>
</dbReference>
<dbReference type="FunFam" id="2.10.25.10:FF:000136">
    <property type="entry name" value="Neurogenic locus notch 1"/>
    <property type="match status" value="1"/>
</dbReference>
<dbReference type="FunFam" id="2.10.25.10:FF:000279">
    <property type="entry name" value="Neurogenic locus notch 1"/>
    <property type="match status" value="1"/>
</dbReference>
<dbReference type="FunFam" id="3.30.300.320:FF:000001">
    <property type="entry name" value="Neurogenic locus notch 1"/>
    <property type="match status" value="1"/>
</dbReference>
<dbReference type="FunFam" id="3.30.70.3310:FF:000003">
    <property type="entry name" value="Neurogenic locus notch 1"/>
    <property type="match status" value="1"/>
</dbReference>
<dbReference type="FunFam" id="2.10.25.10:FF:000558">
    <property type="entry name" value="Neurogenic locus notch homolog protein 1"/>
    <property type="match status" value="1"/>
</dbReference>
<dbReference type="FunFam" id="2.10.25.10:FF:000688">
    <property type="entry name" value="Neurogenic locus notch homolog protein 1"/>
    <property type="match status" value="1"/>
</dbReference>
<dbReference type="FunFam" id="2.10.25.10:FF:000955">
    <property type="entry name" value="Neurogenic locus notch homolog protein 1"/>
    <property type="match status" value="1"/>
</dbReference>
<dbReference type="FunFam" id="2.10.25.10:FF:000031">
    <property type="entry name" value="neurogenic locus notch homolog protein 3"/>
    <property type="match status" value="1"/>
</dbReference>
<dbReference type="FunFam" id="2.10.25.10:FF:000060">
    <property type="entry name" value="Neurogenic locus notch protein 1"/>
    <property type="match status" value="2"/>
</dbReference>
<dbReference type="FunFam" id="2.10.25.10:FF:000092">
    <property type="entry name" value="Neurogenic locus notch protein 1"/>
    <property type="match status" value="1"/>
</dbReference>
<dbReference type="FunFam" id="2.10.25.10:FF:000127">
    <property type="entry name" value="Neurogenic locus notch protein 1"/>
    <property type="match status" value="3"/>
</dbReference>
<dbReference type="FunFam" id="2.10.25.10:FF:000157">
    <property type="entry name" value="Neurogenic locus notch protein 1"/>
    <property type="match status" value="1"/>
</dbReference>
<dbReference type="FunFam" id="2.10.25.10:FF:000253">
    <property type="entry name" value="Neurogenic locus notch protein 1"/>
    <property type="match status" value="1"/>
</dbReference>
<dbReference type="FunFam" id="2.10.25.10:FF:000521">
    <property type="entry name" value="Neurogenic locus notch protein 1"/>
    <property type="match status" value="1"/>
</dbReference>
<dbReference type="FunFam" id="2.10.25.10:FF:000524">
    <property type="entry name" value="Neurogenic locus notch protein 1"/>
    <property type="match status" value="1"/>
</dbReference>
<dbReference type="FunFam" id="2.10.25.10:FF:000125">
    <property type="entry name" value="Neurogenic locus notch protein-like"/>
    <property type="match status" value="1"/>
</dbReference>
<dbReference type="FunFam" id="2.10.25.10:FF:000095">
    <property type="entry name" value="Notch, isoform B"/>
    <property type="match status" value="1"/>
</dbReference>
<dbReference type="FunFam" id="2.10.25.10:FF:000143">
    <property type="entry name" value="Protein crumbs 1"/>
    <property type="match status" value="1"/>
</dbReference>
<dbReference type="FunFam" id="2.10.25.10:FF:000146">
    <property type="entry name" value="Putative neurogenic locus notch"/>
    <property type="match status" value="1"/>
</dbReference>
<dbReference type="FunFam" id="2.10.25.10:FF:000309">
    <property type="entry name" value="Uncharacterized protein, isoform A"/>
    <property type="match status" value="1"/>
</dbReference>
<dbReference type="FunFam" id="2.10.25.10:FF:000472">
    <property type="entry name" value="Uncharacterized protein, isoform A"/>
    <property type="match status" value="1"/>
</dbReference>
<dbReference type="Gene3D" id="3.30.300.320">
    <property type="match status" value="1"/>
</dbReference>
<dbReference type="Gene3D" id="3.30.70.3310">
    <property type="match status" value="1"/>
</dbReference>
<dbReference type="Gene3D" id="1.25.40.20">
    <property type="entry name" value="Ankyrin repeat-containing domain"/>
    <property type="match status" value="1"/>
</dbReference>
<dbReference type="Gene3D" id="2.10.25.10">
    <property type="entry name" value="Laminin"/>
    <property type="match status" value="35"/>
</dbReference>
<dbReference type="InterPro" id="IPR002110">
    <property type="entry name" value="Ankyrin_rpt"/>
</dbReference>
<dbReference type="InterPro" id="IPR036770">
    <property type="entry name" value="Ankyrin_rpt-contain_sf"/>
</dbReference>
<dbReference type="InterPro" id="IPR001881">
    <property type="entry name" value="EGF-like_Ca-bd_dom"/>
</dbReference>
<dbReference type="InterPro" id="IPR013032">
    <property type="entry name" value="EGF-like_CS"/>
</dbReference>
<dbReference type="InterPro" id="IPR000742">
    <property type="entry name" value="EGF-like_dom"/>
</dbReference>
<dbReference type="InterPro" id="IPR000152">
    <property type="entry name" value="EGF-type_Asp/Asn_hydroxyl_site"/>
</dbReference>
<dbReference type="InterPro" id="IPR018097">
    <property type="entry name" value="EGF_Ca-bd_CS"/>
</dbReference>
<dbReference type="InterPro" id="IPR009030">
    <property type="entry name" value="Growth_fac_rcpt_cys_sf"/>
</dbReference>
<dbReference type="InterPro" id="IPR008297">
    <property type="entry name" value="Notch"/>
</dbReference>
<dbReference type="InterPro" id="IPR035993">
    <property type="entry name" value="Notch-like_dom_sf"/>
</dbReference>
<dbReference type="InterPro" id="IPR051355">
    <property type="entry name" value="Notch/Slit_guidance"/>
</dbReference>
<dbReference type="InterPro" id="IPR049883">
    <property type="entry name" value="NOTCH1_EGF-like"/>
</dbReference>
<dbReference type="InterPro" id="IPR022362">
    <property type="entry name" value="Notch_1"/>
</dbReference>
<dbReference type="InterPro" id="IPR024600">
    <property type="entry name" value="Notch_C"/>
</dbReference>
<dbReference type="InterPro" id="IPR000800">
    <property type="entry name" value="Notch_dom"/>
</dbReference>
<dbReference type="InterPro" id="IPR010660">
    <property type="entry name" value="Notch_NOD_dom"/>
</dbReference>
<dbReference type="InterPro" id="IPR011656">
    <property type="entry name" value="Notch_NODP_dom"/>
</dbReference>
<dbReference type="PANTHER" id="PTHR45836:SF12">
    <property type="entry name" value="NEUROGENIC LOCUS NOTCH HOMOLOG PROTEIN 1"/>
    <property type="match status" value="1"/>
</dbReference>
<dbReference type="PANTHER" id="PTHR45836">
    <property type="entry name" value="SLIT HOMOLOG"/>
    <property type="match status" value="1"/>
</dbReference>
<dbReference type="Pfam" id="PF00023">
    <property type="entry name" value="Ank"/>
    <property type="match status" value="1"/>
</dbReference>
<dbReference type="Pfam" id="PF12796">
    <property type="entry name" value="Ank_2"/>
    <property type="match status" value="2"/>
</dbReference>
<dbReference type="Pfam" id="PF00008">
    <property type="entry name" value="EGF"/>
    <property type="match status" value="19"/>
</dbReference>
<dbReference type="Pfam" id="PF07645">
    <property type="entry name" value="EGF_CA"/>
    <property type="match status" value="4"/>
</dbReference>
<dbReference type="Pfam" id="PF12661">
    <property type="entry name" value="hEGF"/>
    <property type="match status" value="7"/>
</dbReference>
<dbReference type="Pfam" id="PF06816">
    <property type="entry name" value="NOD"/>
    <property type="match status" value="1"/>
</dbReference>
<dbReference type="Pfam" id="PF07684">
    <property type="entry name" value="NODP"/>
    <property type="match status" value="1"/>
</dbReference>
<dbReference type="Pfam" id="PF00066">
    <property type="entry name" value="Notch"/>
    <property type="match status" value="3"/>
</dbReference>
<dbReference type="PIRSF" id="PIRSF002279">
    <property type="entry name" value="Notch"/>
    <property type="match status" value="1"/>
</dbReference>
<dbReference type="PRINTS" id="PR01452">
    <property type="entry name" value="LNOTCHREPEAT"/>
</dbReference>
<dbReference type="PRINTS" id="PR01983">
    <property type="entry name" value="NOTCH"/>
</dbReference>
<dbReference type="PRINTS" id="PR01984">
    <property type="entry name" value="NOTCH1"/>
</dbReference>
<dbReference type="SMART" id="SM00248">
    <property type="entry name" value="ANK"/>
    <property type="match status" value="6"/>
</dbReference>
<dbReference type="SMART" id="SM01334">
    <property type="entry name" value="DUF3454"/>
    <property type="match status" value="1"/>
</dbReference>
<dbReference type="SMART" id="SM00181">
    <property type="entry name" value="EGF"/>
    <property type="match status" value="36"/>
</dbReference>
<dbReference type="SMART" id="SM00179">
    <property type="entry name" value="EGF_CA"/>
    <property type="match status" value="33"/>
</dbReference>
<dbReference type="SMART" id="SM00004">
    <property type="entry name" value="NL"/>
    <property type="match status" value="3"/>
</dbReference>
<dbReference type="SMART" id="SM01338">
    <property type="entry name" value="NOD"/>
    <property type="match status" value="1"/>
</dbReference>
<dbReference type="SMART" id="SM01339">
    <property type="entry name" value="NODP"/>
    <property type="match status" value="1"/>
</dbReference>
<dbReference type="SUPFAM" id="SSF48403">
    <property type="entry name" value="Ankyrin repeat"/>
    <property type="match status" value="1"/>
</dbReference>
<dbReference type="SUPFAM" id="SSF57196">
    <property type="entry name" value="EGF/Laminin"/>
    <property type="match status" value="15"/>
</dbReference>
<dbReference type="SUPFAM" id="SSF57184">
    <property type="entry name" value="Growth factor receptor domain"/>
    <property type="match status" value="6"/>
</dbReference>
<dbReference type="SUPFAM" id="SSF90193">
    <property type="entry name" value="Notch domain"/>
    <property type="match status" value="3"/>
</dbReference>
<dbReference type="PROSITE" id="PS50297">
    <property type="entry name" value="ANK_REP_REGION"/>
    <property type="match status" value="1"/>
</dbReference>
<dbReference type="PROSITE" id="PS50088">
    <property type="entry name" value="ANK_REPEAT"/>
    <property type="match status" value="4"/>
</dbReference>
<dbReference type="PROSITE" id="PS00010">
    <property type="entry name" value="ASX_HYDROXYL"/>
    <property type="match status" value="22"/>
</dbReference>
<dbReference type="PROSITE" id="PS00022">
    <property type="entry name" value="EGF_1"/>
    <property type="match status" value="35"/>
</dbReference>
<dbReference type="PROSITE" id="PS01186">
    <property type="entry name" value="EGF_2"/>
    <property type="match status" value="27"/>
</dbReference>
<dbReference type="PROSITE" id="PS50026">
    <property type="entry name" value="EGF_3"/>
    <property type="match status" value="36"/>
</dbReference>
<dbReference type="PROSITE" id="PS01187">
    <property type="entry name" value="EGF_CA"/>
    <property type="match status" value="21"/>
</dbReference>
<dbReference type="PROSITE" id="PS50258">
    <property type="entry name" value="LNR"/>
    <property type="match status" value="3"/>
</dbReference>
<proteinExistence type="evidence at protein level"/>
<accession>Q01705</accession>
<accession>Q06007</accession>
<accession>Q3TZW2</accession>
<accession>Q3U3Y2</accession>
<accession>Q61905</accession>
<accession>Q7TQ50</accession>
<accession>Q7TQ51</accession>
<accession>Q7TQ52</accession>
<accession>Q8K428</accession>
<accession>Q99JC2</accession>
<accession>Q9QW58</accession>
<accession>Q9R0X7</accession>
<name>NOTC1_MOUSE</name>
<evidence type="ECO:0000250" key="1"/>
<evidence type="ECO:0000250" key="2">
    <source>
        <dbReference type="UniProtKB" id="P46531"/>
    </source>
</evidence>
<evidence type="ECO:0000250" key="3">
    <source>
        <dbReference type="UniProtKB" id="Q07008"/>
    </source>
</evidence>
<evidence type="ECO:0000255" key="4"/>
<evidence type="ECO:0000255" key="5">
    <source>
        <dbReference type="PROSITE-ProRule" id="PRU00076"/>
    </source>
</evidence>
<evidence type="ECO:0000255" key="6">
    <source>
        <dbReference type="PROSITE-ProRule" id="PRU00525"/>
    </source>
</evidence>
<evidence type="ECO:0000256" key="7">
    <source>
        <dbReference type="SAM" id="MobiDB-lite"/>
    </source>
</evidence>
<evidence type="ECO:0000269" key="8">
    <source>
    </source>
</evidence>
<evidence type="ECO:0000269" key="9">
    <source>
    </source>
</evidence>
<evidence type="ECO:0000269" key="10">
    <source>
    </source>
</evidence>
<evidence type="ECO:0000269" key="11">
    <source>
    </source>
</evidence>
<evidence type="ECO:0000269" key="12">
    <source>
    </source>
</evidence>
<evidence type="ECO:0000269" key="13">
    <source>
    </source>
</evidence>
<evidence type="ECO:0000269" key="14">
    <source>
    </source>
</evidence>
<evidence type="ECO:0000269" key="15">
    <source>
    </source>
</evidence>
<evidence type="ECO:0000269" key="16">
    <source>
    </source>
</evidence>
<evidence type="ECO:0000269" key="17">
    <source>
    </source>
</evidence>
<evidence type="ECO:0000269" key="18">
    <source>
    </source>
</evidence>
<evidence type="ECO:0000269" key="19">
    <source>
    </source>
</evidence>
<evidence type="ECO:0000269" key="20">
    <source>
    </source>
</evidence>
<evidence type="ECO:0000269" key="21">
    <source>
    </source>
</evidence>
<evidence type="ECO:0000269" key="22">
    <source>
    </source>
</evidence>
<evidence type="ECO:0000269" key="23">
    <source>
    </source>
</evidence>
<evidence type="ECO:0000269" key="24">
    <source>
    </source>
</evidence>
<evidence type="ECO:0000269" key="25">
    <source>
    </source>
</evidence>
<evidence type="ECO:0000269" key="26">
    <source>
    </source>
</evidence>
<evidence type="ECO:0000269" key="27">
    <source>
    </source>
</evidence>
<evidence type="ECO:0000269" key="28">
    <source>
    </source>
</evidence>
<evidence type="ECO:0000269" key="29">
    <source>
    </source>
</evidence>
<evidence type="ECO:0000269" key="30">
    <source>
    </source>
</evidence>
<evidence type="ECO:0000269" key="31">
    <source>
    </source>
</evidence>
<evidence type="ECO:0000269" key="32">
    <source>
    </source>
</evidence>
<evidence type="ECO:0000269" key="33">
    <source>
    </source>
</evidence>
<evidence type="ECO:0000269" key="34">
    <source>
    </source>
</evidence>
<evidence type="ECO:0000303" key="35">
    <source>
    </source>
</evidence>
<evidence type="ECO:0000303" key="36">
    <source>
    </source>
</evidence>
<evidence type="ECO:0000303" key="37">
    <source>
    </source>
</evidence>
<evidence type="ECO:0000305" key="38"/>
<evidence type="ECO:0000305" key="39">
    <source>
    </source>
</evidence>
<evidence type="ECO:0000305" key="40">
    <source>
    </source>
</evidence>
<evidence type="ECO:0000305" key="41">
    <source>
    </source>
</evidence>
<evidence type="ECO:0000305" key="42">
    <source>
    </source>
</evidence>
<evidence type="ECO:0000312" key="43">
    <source>
        <dbReference type="Proteomes" id="UP000000589"/>
    </source>
</evidence>
<evidence type="ECO:0007744" key="44">
    <source>
    </source>
</evidence>
<evidence type="ECO:0007829" key="45">
    <source>
        <dbReference type="PDB" id="1YMP"/>
    </source>
</evidence>
<evidence type="ECO:0007829" key="46">
    <source>
        <dbReference type="PDB" id="2QC9"/>
    </source>
</evidence>
<evidence type="ECO:0007829" key="47">
    <source>
        <dbReference type="PDB" id="2RQZ"/>
    </source>
</evidence>
<evidence type="ECO:0007829" key="48">
    <source>
        <dbReference type="PDB" id="2RR0"/>
    </source>
</evidence>
<evidence type="ECO:0007829" key="49">
    <source>
        <dbReference type="PDB" id="5KY0"/>
    </source>
</evidence>
<evidence type="ECO:0007829" key="50">
    <source>
        <dbReference type="PDB" id="5KY4"/>
    </source>
</evidence>
<evidence type="ECO:0007829" key="51">
    <source>
        <dbReference type="PDB" id="7ABV"/>
    </source>
</evidence>